<keyword id="KW-0002">3D-structure</keyword>
<keyword id="KW-0025">Alternative splicing</keyword>
<keyword id="KW-0156">Chromatin regulator</keyword>
<keyword id="KW-0225">Disease variant</keyword>
<keyword id="KW-0238">DNA-binding</keyword>
<keyword id="KW-0539">Nucleus</keyword>
<keyword id="KW-0597">Phosphoprotein</keyword>
<keyword id="KW-1267">Proteomics identification</keyword>
<keyword id="KW-1185">Reference proteome</keyword>
<keyword id="KW-0678">Repressor</keyword>
<keyword id="KW-0804">Transcription</keyword>
<keyword id="KW-0805">Transcription regulation</keyword>
<reference key="1">
    <citation type="journal article" date="1997" name="Science">
        <title>Positional cloning of the gene for multiple endocrine neoplasia-type 1.</title>
        <authorList>
            <person name="Chandrasekharappa S.C."/>
            <person name="Guru S.C."/>
            <person name="Manickam P."/>
            <person name="Olufemi S.-E."/>
            <person name="Collins F.S."/>
            <person name="Emmert-Buck M.R."/>
            <person name="Debelenko L.V."/>
            <person name="Zhuang Z."/>
            <person name="Lubensky I.A."/>
            <person name="Liotta L.A."/>
            <person name="Crabtree J.S."/>
            <person name="Wang Y."/>
            <person name="Roe B.A."/>
            <person name="Weisemann J."/>
            <person name="Boguski M.S."/>
            <person name="Agarwal S.K."/>
            <person name="Kester M.B."/>
            <person name="Kim Y.S."/>
            <person name="Heppner C."/>
            <person name="Dong Q."/>
            <person name="Spiegel A.M."/>
            <person name="Burns A.L."/>
            <person name="Marx S.J."/>
        </authorList>
    </citation>
    <scope>NUCLEOTIDE SEQUENCE [GENOMIC DNA / MRNA] (ISOFORMS 1 AND 2)</scope>
    <scope>VARIANTS MEN1 ARG-22; LYS-119 DEL; GLU-363 DEL AND ARG-436</scope>
    <scope>VARIANTS GLN-171 AND ALA-541</scope>
    <source>
        <tissue>Leukocyte</tissue>
    </source>
</reference>
<reference key="2">
    <citation type="journal article" date="2006" name="Nature">
        <title>Human chromosome 11 DNA sequence and analysis including novel gene identification.</title>
        <authorList>
            <person name="Taylor T.D."/>
            <person name="Noguchi H."/>
            <person name="Totoki Y."/>
            <person name="Toyoda A."/>
            <person name="Kuroki Y."/>
            <person name="Dewar K."/>
            <person name="Lloyd C."/>
            <person name="Itoh T."/>
            <person name="Takeda T."/>
            <person name="Kim D.-W."/>
            <person name="She X."/>
            <person name="Barlow K.F."/>
            <person name="Bloom T."/>
            <person name="Bruford E."/>
            <person name="Chang J.L."/>
            <person name="Cuomo C.A."/>
            <person name="Eichler E."/>
            <person name="FitzGerald M.G."/>
            <person name="Jaffe D.B."/>
            <person name="LaButti K."/>
            <person name="Nicol R."/>
            <person name="Park H.-S."/>
            <person name="Seaman C."/>
            <person name="Sougnez C."/>
            <person name="Yang X."/>
            <person name="Zimmer A.R."/>
            <person name="Zody M.C."/>
            <person name="Birren B.W."/>
            <person name="Nusbaum C."/>
            <person name="Fujiyama A."/>
            <person name="Hattori M."/>
            <person name="Rogers J."/>
            <person name="Lander E.S."/>
            <person name="Sakaki Y."/>
        </authorList>
    </citation>
    <scope>NUCLEOTIDE SEQUENCE [LARGE SCALE GENOMIC DNA]</scope>
</reference>
<reference key="3">
    <citation type="journal article" date="2007" name="Clin. Endocrinol. (Oxf.)">
        <title>Novel MEN1 germline mutations in Brazilian families with multiple endocrine neoplasia type 1.</title>
        <authorList>
            <person name="Toledo R.A."/>
            <person name="Lourenco D.M."/>
            <person name="Coutinho F.L."/>
            <person name="Quedas E."/>
            <person name="Mackowiack I."/>
            <person name="Machado M.C."/>
            <person name="Montenegro F."/>
            <person name="Cunha-Neto M.B."/>
            <person name="Liberman B."/>
            <person name="Pereira M.A."/>
            <person name="Correa P.H."/>
            <person name="Toledo S.P."/>
        </authorList>
    </citation>
    <scope>NUCLEOTIDE SEQUENCE [GENOMIC DNA] (ISOFORM 1)</scope>
    <scope>VARIANTS MEN1 89-LEU--ALA-95 DEL; PHE-147; ARG-413; PRO-414 AND CYS-471</scope>
    <scope>VARIANT ALA-541</scope>
</reference>
<reference key="4">
    <citation type="journal article" date="2004" name="Genome Res.">
        <title>The status, quality, and expansion of the NIH full-length cDNA project: the Mammalian Gene Collection (MGC).</title>
        <authorList>
            <consortium name="The MGC Project Team"/>
        </authorList>
    </citation>
    <scope>NUCLEOTIDE SEQUENCE [LARGE SCALE MRNA] (ISOFORM 3)</scope>
    <scope>VARIANT ALA-541</scope>
    <source>
        <tissue>Placenta</tissue>
        <tissue>Uterus</tissue>
    </source>
</reference>
<reference key="5">
    <citation type="journal article" date="1999" name="Cell">
        <title>Menin interacts with the AP1 transcription factor JunD and represses JunD-activated transcription.</title>
        <authorList>
            <person name="Agarwal S.K."/>
            <person name="Guru S.C."/>
            <person name="Heppner C."/>
            <person name="Erdos M.R."/>
            <person name="Collins R.M."/>
            <person name="Park S.Y."/>
            <person name="Saggar S."/>
            <person name="Chandrasekharappa S.C."/>
            <person name="Collins F.S."/>
            <person name="Spiegel A.M."/>
            <person name="Marx S.J."/>
            <person name="Burns A.L."/>
        </authorList>
    </citation>
    <scope>INTERACTION WITH JUND</scope>
    <scope>VARIANTS MEN1 LEU-12; ARG-22; ASP-139; TYR-139; PRO-160; PRO-176; VAL-242; PRO-286; PRO-309; ARG-344 AND ARG-436</scope>
</reference>
<reference key="6">
    <citation type="journal article" date="2001" name="Oncogene">
        <title>The tumor suppressor protein menin interacts with NF-kappaB proteins and inhibits NF-kappaB-mediated transactivation.</title>
        <authorList>
            <person name="Heppner C."/>
            <person name="Bilimoria K.Y."/>
            <person name="Agarwal S.K."/>
            <person name="Kester M."/>
            <person name="Whitty L.J."/>
            <person name="Guru S.C."/>
            <person name="Chandrasekharappa S.C."/>
            <person name="Collins F.S."/>
            <person name="Spiegel A.M."/>
            <person name="Marx S.J."/>
            <person name="Burns A.L."/>
        </authorList>
    </citation>
    <scope>FUNCTION</scope>
    <scope>INTERACTION WITH NFKB1; NFKB2 AND RELA</scope>
</reference>
<reference key="7">
    <citation type="journal article" date="2001" name="Proc. Natl. Acad. Sci. U.S.A.">
        <title>Inactivation of menin, a Smad3-interacting protein, blocks transforming growth factor type beta signaling.</title>
        <authorList>
            <person name="Kaji H."/>
            <person name="Canaff L."/>
            <person name="Lebrun J.J."/>
            <person name="Goltzman D."/>
            <person name="Hendy G.N."/>
        </authorList>
    </citation>
    <scope>FUNCTION</scope>
    <scope>INTERACTION WITH SMAD3</scope>
</reference>
<reference key="8">
    <citation type="journal article" date="2003" name="Cancer Res.">
        <title>Menin associates with FANCD2, a protein involved in repair of DNA damage.</title>
        <authorList>
            <person name="Jin S."/>
            <person name="Mao H."/>
            <person name="Schnepp R.W."/>
            <person name="Sykes S.M."/>
            <person name="Silva A.C."/>
            <person name="D'Andrea A.D."/>
            <person name="Hua X."/>
        </authorList>
    </citation>
    <scope>FUNCTION</scope>
    <scope>SUBCELLULAR LOCATION</scope>
    <scope>INTERACTION WITH FANCD2</scope>
</reference>
<reference key="9">
    <citation type="journal article" date="2003" name="Cell">
        <title>Multiple tumor suppressor pathways negatively regulate telomerase.</title>
        <authorList>
            <person name="Lin S.Y."/>
            <person name="Elledge S.J."/>
        </authorList>
    </citation>
    <scope>FUNCTION IN TERT REPRESSION</scope>
</reference>
<reference key="10">
    <citation type="journal article" date="2004" name="Cancer Res.">
        <title>Functional interaction between tumor suppressor menin and activator of S-phase kinase.</title>
        <authorList>
            <person name="Schnepp R.W."/>
            <person name="Hou Z."/>
            <person name="Wang H."/>
            <person name="Petersen C."/>
            <person name="Silva A."/>
            <person name="Masai H."/>
            <person name="Hua X."/>
        </authorList>
    </citation>
    <scope>INTERACTION WITH DBF4</scope>
</reference>
<reference key="11">
    <citation type="journal article" date="2004" name="Mol. Cell">
        <title>Menin associates with a trithorax family histone methyltransferase complex and with the hoxc8 locus.</title>
        <authorList>
            <person name="Hughes C.M."/>
            <person name="Rozenblatt-Rosen O."/>
            <person name="Milne T.A."/>
            <person name="Copeland T.D."/>
            <person name="Levine S.S."/>
            <person name="Lee J.C."/>
            <person name="Hayes D.N."/>
            <person name="Shanmugam K.S."/>
            <person name="Bhattacharjee A."/>
            <person name="Biondi C.A."/>
            <person name="Kay G.F."/>
            <person name="Hayward N.K."/>
            <person name="Hess J.L."/>
            <person name="Meyerson M."/>
        </authorList>
    </citation>
    <scope>FUNCTION IN H3K4 METHYLATION</scope>
    <scope>IDENTIFICATION IN THE MEN1-ASSOCIATED HISTONE METHYLTRANSFERASE COMPLEX</scope>
    <scope>INTERACTION WITH POLR2A AND POLR2B</scope>
    <scope>VARIANTS MEN1 LEU-12; ARG-22; ASP-139; VAL-242; PRO-309; ARG-344 AND ARG-436</scope>
</reference>
<reference key="12">
    <citation type="journal article" date="2004" name="Mol. Cell. Biol.">
        <title>Leukemia proto-oncoprotein MLL forms a SET1-like histone methyltransferase complex with menin to regulate Hox gene expression.</title>
        <authorList>
            <person name="Yokoyama A."/>
            <person name="Wang Z."/>
            <person name="Wysocka J."/>
            <person name="Sanyal M."/>
            <person name="Aufiero D.J."/>
            <person name="Kitabayashi I."/>
            <person name="Herr W."/>
            <person name="Cleary M.L."/>
        </authorList>
    </citation>
    <scope>IDENTIFICATION IN THE MLL-HCF COMPLEX</scope>
</reference>
<reference key="13">
    <citation type="journal article" date="2007" name="J. Biol. Chem.">
        <title>PTIP associates with MLL3- and MLL4-containing histone H3 lysine 4 methyltransferase complex.</title>
        <authorList>
            <person name="Cho Y.-W."/>
            <person name="Hong T."/>
            <person name="Hong S."/>
            <person name="Guo H."/>
            <person name="Yu H."/>
            <person name="Kim D."/>
            <person name="Guszczynski T."/>
            <person name="Dressler G.R."/>
            <person name="Copeland T.D."/>
            <person name="Kalkum M."/>
            <person name="Ge K."/>
        </authorList>
    </citation>
    <scope>INTERACTION WITH DPY30</scope>
</reference>
<reference key="14">
    <citation type="journal article" date="2007" name="Science">
        <title>ATM and ATR substrate analysis reveals extensive protein networks responsive to DNA damage.</title>
        <authorList>
            <person name="Matsuoka S."/>
            <person name="Ballif B.A."/>
            <person name="Smogorzewska A."/>
            <person name="McDonald E.R. III"/>
            <person name="Hurov K.E."/>
            <person name="Luo J."/>
            <person name="Bakalarski C.E."/>
            <person name="Zhao Z."/>
            <person name="Solimini N."/>
            <person name="Lerenthal Y."/>
            <person name="Shiloh Y."/>
            <person name="Gygi S.P."/>
            <person name="Elledge S.J."/>
        </authorList>
    </citation>
    <scope>IDENTIFICATION BY MASS SPECTROMETRY [LARGE SCALE ANALYSIS]</scope>
    <source>
        <tissue>Embryonic kidney</tissue>
    </source>
</reference>
<reference key="15">
    <citation type="journal article" date="2008" name="Proc. Natl. Acad. Sci. U.S.A.">
        <title>A quantitative atlas of mitotic phosphorylation.</title>
        <authorList>
            <person name="Dephoure N."/>
            <person name="Zhou C."/>
            <person name="Villen J."/>
            <person name="Beausoleil S.A."/>
            <person name="Bakalarski C.E."/>
            <person name="Elledge S.J."/>
            <person name="Gygi S.P."/>
        </authorList>
    </citation>
    <scope>PHOSPHORYLATION [LARGE SCALE ANALYSIS] AT THR-594</scope>
    <scope>IDENTIFICATION BY MASS SPECTROMETRY [LARGE SCALE ANALYSIS]</scope>
    <source>
        <tissue>Cervix carcinoma</tissue>
    </source>
</reference>
<reference key="16">
    <citation type="journal article" date="2010" name="Sci. Signal.">
        <title>Quantitative phosphoproteomics reveals widespread full phosphorylation site occupancy during mitosis.</title>
        <authorList>
            <person name="Olsen J.V."/>
            <person name="Vermeulen M."/>
            <person name="Santamaria A."/>
            <person name="Kumar C."/>
            <person name="Miller M.L."/>
            <person name="Jensen L.J."/>
            <person name="Gnad F."/>
            <person name="Cox J."/>
            <person name="Jensen T.S."/>
            <person name="Nigg E.A."/>
            <person name="Brunak S."/>
            <person name="Mann M."/>
        </authorList>
    </citation>
    <scope>IDENTIFICATION BY MASS SPECTROMETRY [LARGE SCALE ANALYSIS]</scope>
    <source>
        <tissue>Cervix carcinoma</tissue>
    </source>
</reference>
<reference key="17">
    <citation type="journal article" date="2013" name="J. Proteome Res.">
        <title>Toward a comprehensive characterization of a human cancer cell phosphoproteome.</title>
        <authorList>
            <person name="Zhou H."/>
            <person name="Di Palma S."/>
            <person name="Preisinger C."/>
            <person name="Peng M."/>
            <person name="Polat A.N."/>
            <person name="Heck A.J."/>
            <person name="Mohammed S."/>
        </authorList>
    </citation>
    <scope>PHOSPHORYLATION [LARGE SCALE ANALYSIS] AT SER-543 AND THR-594</scope>
    <scope>VARIANT [LARGE SCALE ANALYSIS] ALA-541</scope>
    <scope>IDENTIFICATION BY MASS SPECTROMETRY [LARGE SCALE ANALYSIS]</scope>
    <source>
        <tissue>Cervix carcinoma</tissue>
        <tissue>Erythroleukemia</tissue>
    </source>
</reference>
<reference key="18">
    <citation type="journal article" date="2014" name="Blood">
        <title>The same site on the integrase-binding domain of lens epithelium-derived growth factor is a therapeutic target for MLL leukemia and HIV.</title>
        <authorList>
            <person name="Murai M.J."/>
            <person name="Pollock J."/>
            <person name="He S."/>
            <person name="Miao H."/>
            <person name="Purohit T."/>
            <person name="Yokom A."/>
            <person name="Hess J.L."/>
            <person name="Muntean A.G."/>
            <person name="Grembecka J."/>
            <person name="Cierpicki T."/>
        </authorList>
    </citation>
    <scope>INTERACTION WITH KMT2A AND FUSION PROTEIN KMT2A-MLLT3</scope>
    <scope>INTERACTION OF KMT2A-MEN1 COMPLEX WITH PSIP1</scope>
</reference>
<reference key="19">
    <citation type="journal article" date="2014" name="J. Proteomics">
        <title>An enzyme assisted RP-RPLC approach for in-depth analysis of human liver phosphoproteome.</title>
        <authorList>
            <person name="Bian Y."/>
            <person name="Song C."/>
            <person name="Cheng K."/>
            <person name="Dong M."/>
            <person name="Wang F."/>
            <person name="Huang J."/>
            <person name="Sun D."/>
            <person name="Wang L."/>
            <person name="Ye M."/>
            <person name="Zou H."/>
        </authorList>
    </citation>
    <scope>PHOSPHORYLATION [LARGE SCALE ANALYSIS] AT SER-487</scope>
    <scope>IDENTIFICATION BY MASS SPECTROMETRY [LARGE SCALE ANALYSIS]</scope>
    <source>
        <tissue>Liver</tissue>
    </source>
</reference>
<reference evidence="71 72 73 74" key="20">
    <citation type="journal article" date="2012" name="Blood">
        <title>Structural insights into inhibition of the bivalent menin-MLL interaction by small molecules in leukemia.</title>
        <authorList>
            <person name="Shi A."/>
            <person name="Murai M.J."/>
            <person name="He S."/>
            <person name="Lund G."/>
            <person name="Hartley T."/>
            <person name="Purohit T."/>
            <person name="Reddy G."/>
            <person name="Chruszcz M."/>
            <person name="Grembecka J."/>
            <person name="Cierpicki T."/>
        </authorList>
    </citation>
    <scope>X-RAY CRYSTALLOGRAPHY (1.27 ANGSTROMS) OF 1-598 IN COMPLEX WITH KMT2A AND INHIBITORS MI-2 AND MI-2-2</scope>
    <scope>INTERACTION WITH KMT2A AND FUSION PROTEIN KMT2A-MLLT3</scope>
</reference>
<reference evidence="67 68 69 70" key="21">
    <citation type="journal article" date="2012" name="Nature">
        <title>The same pocket in menin binds both MLL and JUND but has opposite effects on transcription.</title>
        <authorList>
            <person name="Huang J."/>
            <person name="Gurung B."/>
            <person name="Wan B."/>
            <person name="Matkar S."/>
            <person name="Veniaminova N.A."/>
            <person name="Wan K."/>
            <person name="Merchant J.L."/>
            <person name="Hua X."/>
            <person name="Lei M."/>
        </authorList>
    </citation>
    <scope>X-RAY CRYSTALLOGRAPHY (2.50 ANGSTROMS) OF 2-615 IN COMPLEX WITH KMT2A; PSIP1 AND JUND</scope>
    <scope>INTERACTION WITH KMT2A AND JUND</scope>
    <scope>INTERACTION OF KMT2A-MEN1 COMPLEX WITH PSIP1</scope>
    <scope>CHARACTERIZATION OF VARIANTS MEN1 ASP-139; PHE-241; VAL-242; ARG-281 AND ARG-344</scope>
    <scope>CHARACTERIZATION OF VARIANT GLN-284</scope>
    <scope>MUTAGENESIS OF ALA-182; MET-278; ASP-285; GLU-288; GLU-290; TYR-319; TYR-323; GLU-366 AND ASP-370</scope>
    <scope>FUNCTION</scope>
</reference>
<reference key="22">
    <citation type="journal article" date="1997" name="Hum. Mol. Genet.">
        <title>Germline mutations of the MEN1 gene in familial multiple endocrine neoplasia type 1 and related states.</title>
        <authorList>
            <person name="Agarwal S.K."/>
            <person name="Kester M.B."/>
            <person name="Debelenko L.V."/>
            <person name="Heppner C."/>
            <person name="Emmert-Buck M.R."/>
            <person name="Skarulis M.C."/>
            <person name="Doppman J.L."/>
            <person name="Kim Y.S."/>
            <person name="Lubensky I.A."/>
            <person name="Zhuang Z."/>
            <person name="Green J.S."/>
            <person name="Guru S.C."/>
            <person name="Manickam P."/>
            <person name="Olufemi S.E."/>
            <person name="Liotta L.A."/>
            <person name="Chandrasekharappa S.C."/>
            <person name="Collins F.S."/>
            <person name="Spiegel A.M."/>
            <person name="Burns A.L."/>
            <person name="Marx S.J."/>
        </authorList>
    </citation>
    <scope>VARIANT MEN1 SER-447</scope>
</reference>
<reference key="23">
    <citation type="journal article" date="1997" name="Hum. Mol. Genet.">
        <title>Identification of the multiple endocrine neoplasia type 1 (MEN1) gene.</title>
        <authorList>
            <consortium name="The European consortium on MEN1"/>
            <person name="Lemmens I."/>
            <person name="Van de Ven W.J.M."/>
            <person name="Kas K."/>
            <person name="Zhang C.X."/>
            <person name="Giraud S."/>
            <person name="Wautot V."/>
            <person name="Buisson N."/>
            <person name="De Witte K."/>
            <person name="Salandre J."/>
            <person name="Lenoir G."/>
            <person name="Pugeat M."/>
            <person name="Calender A."/>
            <person name="Parente F."/>
            <person name="Quincey D."/>
            <person name="Gaudray P."/>
            <person name="De Wit M.J."/>
            <person name="Lips C.J.M."/>
            <person name="Hoeppener J.W.M."/>
            <person name="Khodaei S."/>
            <person name="Grant A.L."/>
            <person name="Weber G."/>
            <person name="Kytoelae S."/>
            <person name="Teh B.T."/>
            <person name="Farnebo F."/>
            <person name="Phelan C."/>
            <person name="Hayward N."/>
            <person name="Larsson C."/>
            <person name="Pannett A.A.J."/>
            <person name="Forbes S.A."/>
            <person name="Basset J.H.D."/>
            <person name="Thakker R.V."/>
        </authorList>
    </citation>
    <scope>VARIANT MEN1 SER-183</scope>
    <scope>VARIANT GLN-171</scope>
</reference>
<reference key="24">
    <citation type="journal article" date="1997" name="Nat. Genet.">
        <title>Somatic mutation of the MEN1 gene in parathyroid tumours.</title>
        <authorList>
            <person name="Heppner C."/>
            <person name="Kester M.B."/>
            <person name="Agarwal S.K."/>
            <person name="Debelenko L.V."/>
            <person name="Emmert-Buck M.R."/>
            <person name="Guru S.C."/>
            <person name="Manickam P."/>
            <person name="Olufemi S.-E."/>
            <person name="Skarulis M.C."/>
            <person name="Doppman J.L."/>
            <person name="Alexander R.H."/>
            <person name="Kim Y.S."/>
            <person name="Saggar S.K."/>
            <person name="Lubensky I.A."/>
            <person name="Zhuang Z."/>
            <person name="Liotta L.A."/>
            <person name="Chandrasekharappa S.C."/>
            <person name="Collins F.S."/>
            <person name="Spiegel A.M."/>
            <person name="Burns A.L."/>
            <person name="Marx S.J."/>
        </authorList>
    </citation>
    <scope>VARIANT PARATHYROID ADENOMA LYS-26</scope>
</reference>
<reference key="25">
    <citation type="journal article" date="1998" name="Am. J. Hum. Genet.">
        <title>Characterization of mutations in patients with multiple endocrine neoplasia type 1.</title>
        <authorList>
            <person name="Bassett J.H.D."/>
            <person name="Forbes S.A."/>
            <person name="Pannett A.A.J."/>
            <person name="Lloyd S.E."/>
            <person name="Christie P.T."/>
            <person name="Wooding C."/>
            <person name="Harding B."/>
            <person name="Besser G.M."/>
            <person name="Edwards C.R."/>
            <person name="Monson J.P."/>
            <person name="Sampson J."/>
            <person name="Wass J.A.H."/>
            <person name="Wheeler M.H."/>
            <person name="Thakker R.V."/>
        </authorList>
    </citation>
    <scope>VARIANTS MEN1 ASP-42; PRO-160; ASP-164; SER-183 AND GLU-284</scope>
</reference>
<reference key="26">
    <citation type="journal article" date="1998" name="Am. J. Hum. Genet.">
        <title>Germ-line mutation analysis in patients with multiple endocrine neoplasia type 1 and related disorders.</title>
        <authorList>
            <person name="Giraud S."/>
            <person name="Zhang C.X."/>
            <person name="Serova-Sinilnikova O."/>
            <person name="Wautot V."/>
            <person name="Salandre J."/>
            <person name="Buisson N."/>
            <person name="Waterlot C."/>
            <person name="Bauters C."/>
            <person name="Porchet N."/>
            <person name="Aubert J.-P."/>
            <person name="Emy P."/>
            <person name="Cadiot G."/>
            <person name="Delemer B."/>
            <person name="Chabre O."/>
            <person name="Niccoli P."/>
            <person name="Leprat F."/>
            <person name="Duron F."/>
            <person name="Emperauger B."/>
            <person name="Cougard P."/>
            <person name="Goudet P."/>
            <person name="Sarfati E."/>
            <person name="Riou J.-P."/>
            <person name="Guichard S."/>
            <person name="Rodier M."/>
            <person name="Meyrier A."/>
            <person name="Caron P."/>
            <person name="Vantyghem M.-C."/>
            <person name="Assayag M."/>
            <person name="Peix J.-L."/>
            <person name="Pugeat M."/>
            <person name="Rohmer V."/>
            <person name="Vallotton M."/>
            <person name="Lenoir G."/>
            <person name="Gaudray P."/>
            <person name="Proye C."/>
            <person name="Conte-Devolx B."/>
            <person name="Chanson P."/>
            <person name="Shugart Y.Y."/>
            <person name="Goldgar D."/>
            <person name="Murat A."/>
            <person name="Calender A."/>
        </authorList>
    </citation>
    <scope>VARIANTS MEN1</scope>
</reference>
<reference key="27">
    <citation type="journal article" date="1998" name="Am. J. Hum. Genet.">
        <title>A family with isolated hyperparathyroidism segregating a missense MEN1 mutation and showing loss of the wild-type alleles in the parathyroid tumors.</title>
        <authorList>
            <person name="Teh B.T."/>
            <person name="Esapa C.T."/>
            <person name="Houlston R."/>
            <person name="Grandell U."/>
            <person name="Farnebo F."/>
            <person name="Nordenskjoeld M."/>
            <person name="Pearce C.J."/>
            <person name="Carmichael D."/>
            <person name="Larsson C."/>
            <person name="Harris P.E."/>
        </authorList>
    </citation>
    <scope>VARIANT LYS-255</scope>
    <scope>INVOLVEMENT IN ISOLATED HYPERPARATHYROIDISM</scope>
</reference>
<reference key="28">
    <citation type="journal article" date="1998" name="Am. J. Med. Genet.">
        <title>Novel V184E MEN1 germline mutation in a Japanese kindred with familial hyperparathyroidism.</title>
        <authorList>
            <person name="Fujimori M."/>
            <person name="Shirahama S."/>
            <person name="Sakurai A."/>
            <person name="Hashizume K."/>
            <person name="Hama Y."/>
            <person name="Ito K."/>
            <person name="Shingu K."/>
            <person name="Kobayashi S."/>
            <person name="Amano J."/>
            <person name="Fukushima Y."/>
        </authorList>
    </citation>
    <scope>VARIANT GLU-184</scope>
    <scope>INVOLVEMENT IN ISOLATED HYPERPARATHYROIDISM</scope>
</reference>
<reference key="29">
    <citation type="journal article" date="1998" name="Eur. J. Endocrinol.">
        <title>MEN1 gene mutations in 12 MEN1 families and their associated tumors.</title>
        <authorList>
            <person name="Bartsch D."/>
            <person name="Kopp I."/>
            <person name="Bergenfelz A."/>
            <person name="Rieder H."/>
            <person name="Muench K."/>
            <person name="Jaeger K."/>
            <person name="Deiss Y."/>
            <person name="Schudy A."/>
            <person name="Barth P."/>
            <person name="Arnold R."/>
            <person name="Rothmund M."/>
            <person name="Simon B."/>
        </authorList>
    </citation>
    <scope>VARIANTS MEN1 LYS-26 AND PRO-168</scope>
</reference>
<reference key="30">
    <citation type="journal article" date="1998" name="Hum. Mutat.">
        <title>Analysis of recurrent germline mutations in the MEN1 gene encountered in apparently unrelated families.</title>
        <authorList>
            <person name="Agarwal S.K."/>
            <person name="Debelenko L.V."/>
            <person name="Kester M.B."/>
            <person name="Guru S.C."/>
            <person name="Manickam P."/>
            <person name="Olufemi S.-E."/>
            <person name="Skarulis M.C."/>
            <person name="Heppner C."/>
            <person name="Crabtree J.S."/>
            <person name="Lubensky I.A."/>
            <person name="Zhuang Z."/>
            <person name="Kim Y.S."/>
            <person name="Chandrasekharappa S.C."/>
            <person name="Collins F.S."/>
            <person name="Liotta L.A."/>
            <person name="Spiegel A.M."/>
            <person name="Burns A.L."/>
            <person name="Emmert-Buck M.R."/>
            <person name="Marx S.J."/>
        </authorList>
    </citation>
    <scope>VARIANTS MEN1</scope>
</reference>
<reference key="31">
    <citation type="journal article" date="1998" name="Hum. Mutat.">
        <title>Five novel mutations in the familial multiple endocrine neoplasia type 1 (MEN1) gene.</title>
        <authorList>
            <person name="Cote G.J."/>
            <person name="Lee J.E."/>
            <person name="Evans D.B."/>
            <person name="Huang E."/>
            <person name="Schultz P.N."/>
            <person name="Dang G.T."/>
            <person name="Qiu H."/>
            <person name="Shetelbine S."/>
            <person name="Sellin R.V."/>
            <person name="Gagel R.F."/>
        </authorList>
    </citation>
    <scope>VARIANT MEN1 ARG-427</scope>
</reference>
<reference key="32">
    <citation type="journal article" date="1998" name="J. Clin. Endocrinol. Metab.">
        <title>Absence of germ-line mutations of the multiple endocrine neoplasia type 1 (MEN1) gene in familial pituitary adenoma in contrast to MEN1 in Japanese.</title>
        <authorList>
            <person name="Tanaka C."/>
            <person name="Yoshimoto K."/>
            <person name="Yamada S."/>
            <person name="Nishioka H."/>
            <person name="Ii S."/>
            <person name="Moritani M."/>
            <person name="Yamaoka T."/>
            <person name="Itakura M."/>
        </authorList>
    </citation>
    <scope>VARIANT MEN1 LEU-320</scope>
    <scope>VARIANT ALA-541</scope>
</reference>
<reference key="33">
    <citation type="journal article" date="1998" name="J. Clin. Endocrinol. Metab.">
        <title>Mutation analysis of the MEN1 gene in multiple endocrine neoplasia type 1, familial acromegaly and familial isolated hyperparathyroidism.</title>
        <authorList>
            <person name="Teh B.T."/>
            <person name="Kytoelae S."/>
            <person name="Farnebo F."/>
            <person name="Bergman L."/>
            <person name="Wong F.K."/>
            <person name="Weber G."/>
            <person name="Hayward N."/>
            <person name="Larsson C."/>
            <person name="Skogseid B."/>
            <person name="Beckers A."/>
            <person name="Phelan C."/>
            <person name="Edwards M."/>
            <person name="Epstein M."/>
            <person name="Alford F."/>
            <person name="Hurley D."/>
            <person name="Grimmond S."/>
            <person name="Silins G."/>
            <person name="Walters M."/>
            <person name="Stewart C."/>
            <person name="Cardinal J."/>
            <person name="Khodaei S."/>
            <person name="Parente F."/>
            <person name="Tranebjaerg L."/>
            <person name="Jorde R."/>
            <person name="Menon J."/>
            <person name="Khir A."/>
            <person name="Tan T.T."/>
            <person name="Chan S.P."/>
            <person name="Zaini A."/>
            <person name="Khalid B.A.K."/>
            <person name="Sandelin K."/>
            <person name="Thompson N."/>
            <person name="Brandi M.-L."/>
            <person name="Warth M."/>
            <person name="Stock J."/>
            <person name="Leisti J."/>
            <person name="Cameron D."/>
            <person name="Shepherd J.J."/>
            <person name="Oeberg K."/>
            <person name="Nordenskjoeld M."/>
            <person name="Salmela P."/>
        </authorList>
    </citation>
    <scope>VARIANT MEN1 ASN-418</scope>
    <scope>VARIANTS GLN-171 AND ALA-541</scope>
</reference>
<reference key="34">
    <citation type="journal article" date="1998" name="J. Clin. Endocrinol. Metab.">
        <title>Parathyroid MEN1 gene mutations in relation to clinical characteristics of nonfamilial primary hyperparathyroidism.</title>
        <authorList>
            <person name="Carling T."/>
            <person name="Correa P."/>
            <person name="Hessman O."/>
            <person name="Hedberg J."/>
            <person name="Skogseid B."/>
            <person name="Lindberg D."/>
            <person name="Rastad J."/>
            <person name="Westin G."/>
            <person name="Akerstrom G."/>
        </authorList>
    </citation>
    <scope>VARIANT MEN1 ASP-139</scope>
    <scope>VARIANT TRP-152</scope>
</reference>
<reference key="35">
    <citation type="journal article" date="1998" name="J. Clin. Endocrinol. Metab.">
        <title>Menin mutations in MEN1 patients.</title>
        <authorList>
            <person name="Mayr B."/>
            <person name="Brabant G."/>
            <person name="von zur Muehlen A."/>
        </authorList>
    </citation>
    <scope>VARIANT MEN1 SER-423</scope>
</reference>
<reference key="36">
    <citation type="journal article" date="1998" name="J. Invest. Dermatol.">
        <title>Somatic mutations of the MEN1 tumor suppressor gene detected in sporadic angiofibromas.</title>
        <authorList>
            <person name="Boeni R."/>
            <person name="Vortmeyer A.O."/>
            <person name="Pack S."/>
            <person name="Park W.-S."/>
            <person name="Burg G."/>
            <person name="Hofbauer G."/>
            <person name="Darling T."/>
            <person name="Liotta L."/>
            <person name="Zhuang Z."/>
        </authorList>
    </citation>
    <scope>VARIANTS MEN1 ILE-135 AND LYS-359</scope>
</reference>
<reference key="37">
    <citation type="journal article" date="1998" name="J. Hum. Genet.">
        <title>Novel MEN1 gene mutations in familial multiple endocrine neoplasia type 1.</title>
        <authorList>
            <person name="Sakurai A."/>
            <person name="Shirahama S."/>
            <person name="Fujimori M."/>
            <person name="Katai M."/>
            <person name="Itakura Y."/>
            <person name="Kobayashi S."/>
            <person name="Amano J."/>
            <person name="Fukushima Y."/>
            <person name="Hashizume K."/>
        </authorList>
    </citation>
    <scope>VARIANTS MEN1 LYS-119 DEL AND 166-GLN--LEU-168 DEL</scope>
</reference>
<reference key="38">
    <citation type="journal article" date="1998" name="J. Med. Genet.">
        <title>Identification of five novel germline mutations of the MEN1 gene in Japanese multiple endocrine neoplasia type 1 (MEN1) families.</title>
        <authorList>
            <person name="Sato M."/>
            <person name="Matsubara S."/>
            <person name="Miyauchi A."/>
            <person name="Ohye H."/>
            <person name="Imachi H."/>
            <person name="Murao K."/>
            <person name="Takahara J."/>
        </authorList>
    </citation>
    <scope>VARIANT MEN1 GLY-45</scope>
</reference>
<reference key="39">
    <citation type="journal article" date="1999" name="Diagn. Mol. Pathol.">
        <title>Molecular pathology of multiple endocrine neoplasia type I: two novel germline mutations and updated classification of mutations affecting MEN1 gene.</title>
        <authorList>
            <person name="Martin-Campos J.M."/>
            <person name="Catasus L."/>
            <person name="Chico A."/>
            <person name="Mayoral C."/>
            <person name="Lagarda E."/>
            <person name="Gallart L."/>
            <person name="Mato E."/>
            <person name="Rodriguez-Espinosa J."/>
            <person name="Matias-Guiu X."/>
            <person name="De Leiva A."/>
            <person name="Blanco-Vaca F."/>
        </authorList>
    </citation>
    <scope>VARIANT MEN1 ARG-139</scope>
</reference>
<reference key="40">
    <citation type="journal article" date="1999" name="Eur. J. Endocrinol.">
        <title>A new mutation of the MEN1 gene in an Italian kindred with multiple endocrine neoplasia type 1.</title>
        <authorList>
            <person name="Cetani F."/>
            <person name="Pardi E."/>
            <person name="Cianferotti L."/>
            <person name="Vignali E."/>
            <person name="Picone A."/>
            <person name="Miccoli P."/>
            <person name="Pinchera A."/>
            <person name="Marcocci C."/>
        </authorList>
    </citation>
    <scope>VARIANT MEN1 PRO-444</scope>
</reference>
<reference key="41">
    <citation type="journal article" date="1999" name="Eur. J. Endocrinol.">
        <title>Germline MEN1 mutations in sixteen Japanese families with multiple endocrine neoplasia type 1 (MEN1).</title>
        <authorList>
            <person name="Hai N."/>
            <person name="Aoki N."/>
            <person name="Matsuda A."/>
            <person name="Mori T."/>
            <person name="Kosugi S."/>
        </authorList>
    </citation>
    <scope>VARIANTS MEN1 ARG-183; ARG-225; TYR-241 AND PRO-253</scope>
    <scope>VARIANT ALA-541</scope>
</reference>
<reference key="42">
    <citation type="journal article" date="1999" name="Hum. Genet.">
        <title>MEN I gene mutations in sporadic adrenal adenomas.</title>
        <authorList>
            <person name="Schulte K.-M."/>
            <person name="Heinze M."/>
            <person name="Mengel M."/>
            <person name="Simon D."/>
            <person name="Scheuring S."/>
            <person name="Koehrer K."/>
            <person name="Roeher H.-D."/>
        </authorList>
    </citation>
    <scope>VARIANT ADRENAL ADENOMA SER-552</scope>
</reference>
<reference key="43">
    <citation type="journal article" date="1999" name="Hum. Mutat.">
        <title>Mutation analysis of the MEN1 gene in Belgian patients with multiple endocrine neoplasia type 1 and related diseases.</title>
        <authorList>
            <person name="Poncin J."/>
            <person name="Abs R."/>
            <person name="Velkeniers B."/>
            <person name="Bonduelle M."/>
            <person name="Abramowicz M."/>
            <person name="Legros J.-J."/>
            <person name="Verloes A."/>
            <person name="Meurisse M."/>
            <person name="van Gaal L."/>
            <person name="Verellen C."/>
            <person name="Koulischer L."/>
            <person name="Beckers A."/>
        </authorList>
    </citation>
    <scope>VARIANTS MEN1 TRP-39; TYR-172; ASP-179 AND PRO-264</scope>
    <scope>VARIANTS GLN-171; PRO-267 AND ALA-541</scope>
    <scope>INVOLVEMENT IN ISOLATED HYPERPARATHYROIDISM</scope>
</reference>
<reference key="44">
    <citation type="journal article" date="1999" name="Hum. Mutat.">
        <title>Germline mutations in the multiple endocrine neoplasia type 1 gene: evidence for frequent splicing defects.</title>
        <authorList>
            <person name="Mutch M.G."/>
            <person name="Dilley W.G."/>
            <person name="Sanjurjo F."/>
            <person name="Debenedetti M.K."/>
            <person name="Doherty G.M."/>
            <person name="Wells S.A. Jr."/>
            <person name="Goodfellow P.J."/>
            <person name="Lairmore T.C."/>
        </authorList>
    </citation>
    <scope>VARIANTS MEN1 ASP-156 AND ARG-241</scope>
</reference>
<reference key="45">
    <citation type="journal article" date="1999" name="Int. J. Mol. Med.">
        <title>Germline mutations in the MEN1 gene: creation of a new splice acceptor site and insertion of 7 intron nucleotides into the mRNA.</title>
        <authorList>
            <person name="Engelbach M."/>
            <person name="Forst T."/>
            <person name="Hankeln T."/>
            <person name="Tratzky M."/>
            <person name="Heerdt S."/>
            <person name="Pfuetzner A."/>
            <person name="Kann P."/>
            <person name="Kunt T."/>
            <person name="Schneider S."/>
            <person name="Schmidt E.R."/>
            <person name="Beyer J."/>
        </authorList>
    </citation>
    <scope>VARIANT MEN1 PHE-155</scope>
</reference>
<reference key="46">
    <citation type="journal article" date="2000" name="Br. J. Cancer">
        <title>Identification of MEN1 gene mutations in families with MEN 1 and related disorders.</title>
        <authorList>
            <person name="Bergman L."/>
            <person name="Teh B.T."/>
            <person name="Cardinal J."/>
            <person name="Palmer J."/>
            <person name="Walters M."/>
            <person name="Shepherd J."/>
            <person name="Cameron D."/>
            <person name="Hayward N."/>
        </authorList>
    </citation>
    <scope>VARIANTS MEN1 LEU-229; ASP-353; SER-373 AND PRO-415</scope>
</reference>
<reference key="47">
    <citation type="journal article" date="2000" name="Cancer Res.">
        <title>Screening of the MEN1 gene and discovery of germ-line and somatic mutations in apparently sporadic parathyroid tumors.</title>
        <authorList>
            <person name="Uchino S."/>
            <person name="Noguchi S."/>
            <person name="Sato M."/>
            <person name="Yamashita H."/>
            <person name="Yamashita H."/>
            <person name="Watanabe S."/>
            <person name="Murakami T."/>
            <person name="Toda M."/>
            <person name="Ohshima A."/>
            <person name="Futata T."/>
            <person name="Mizukoshi T."/>
            <person name="Koike E."/>
            <person name="Takatsu K."/>
            <person name="Terao K."/>
            <person name="Wakiya S."/>
            <person name="Nagatomo M."/>
            <person name="Adachi M."/>
        </authorList>
    </citation>
    <scope>VARIANTS PARATHYROID TUMOR ASP-156; ARG-183; TRP-253; ALA-274 AND PRO-284</scope>
</reference>
<reference key="48">
    <citation type="journal article" date="2000" name="Eur. J. Clin. Invest.">
        <title>Criteria for mutation analysis in MEN 1-suspected patients: MEN 1 case-finding.</title>
        <authorList>
            <person name="Roijers J.F.M."/>
            <person name="de Wit M.J."/>
            <person name="van der Luijt R.B."/>
            <person name="Ploos van Amstel H.K."/>
            <person name="Hoeppener J.W.M."/>
            <person name="Lips C.J.M."/>
        </authorList>
    </citation>
    <scope>VARIANTS MEN1 TRP-39; LYS-119 DEL; GLN-179; PRO-223; ARG-317; PRO-337; ASN-348; VAL-385 AND SER-544</scope>
</reference>
<reference key="49">
    <citation type="journal article" date="2000" name="Eur. J. Endocrinol.">
        <title>MEN1 gene mutation analysis in Italian patients with multiple endocrine neoplasia type 1.</title>
        <authorList>
            <person name="Morelli A."/>
            <person name="Falchetti A."/>
            <person name="Martineti V."/>
            <person name="Becherini L."/>
            <person name="Mark M."/>
            <person name="Friedman E."/>
            <person name="Brandi M.L."/>
        </authorList>
    </citation>
    <scope>VARIANTS MEN1 LYS-45; MET-215 AND ARG-344</scope>
</reference>
<reference key="50">
    <citation type="journal article" date="2000" name="Eur. J. Endocrinol.">
        <title>A novel mutation of the MEN1 gene in a Japanese kindred with familial isolated primary hyperparathyroidism.</title>
        <authorList>
            <person name="Honda M."/>
            <person name="Tsukada T."/>
            <person name="Tanaka H."/>
            <person name="Maruyama K."/>
            <person name="Yamaguchi K."/>
            <person name="Obara T."/>
            <person name="Yamaji T."/>
            <person name="Ishibashi M."/>
        </authorList>
    </citation>
    <scope>VARIANT ASP-305</scope>
    <scope>INVOLVEMENT IN ISOLATED HYPERPARATHYROIDISM</scope>
</reference>
<reference key="51">
    <citation type="journal article" date="2000" name="Hum. Mutat.">
        <title>A novel mutation E179K of the MEN1 gene predisposes for multiple endocrine neoplasia-type 1 (MEN1).</title>
        <authorList>
            <person name="Weinhaeusel A."/>
            <person name="Vierhapper H."/>
            <person name="Schlegl R."/>
            <person name="Wagner T."/>
            <person name="Muhr D."/>
            <person name="Scheuba C."/>
            <person name="Niederle B."/>
            <person name="Haas O.A."/>
        </authorList>
    </citation>
    <scope>VARIANT MEN1 LYS-179</scope>
</reference>
<reference key="52">
    <citation type="journal article" date="2000" name="J. Clin. Endocrinol. Metab.">
        <title>Familial isolated hyperparathyroidism as a variant of multiple endocrine neoplasia type 1 in a large Danish pedigree.</title>
        <authorList>
            <person name="Kassem M."/>
            <person name="Kruse T.A."/>
            <person name="Wong F.K."/>
            <person name="Larsson C."/>
            <person name="Teh B.T."/>
        </authorList>
    </citation>
    <scope>VARIANT PRO-260</scope>
    <scope>INVOLVEMENT IN ISOLATED HYPERPARATHYROIDISM</scope>
</reference>
<reference key="53">
    <citation type="journal article" date="2000" name="J. Clin. Endocrinol. Metab.">
        <title>Pituitary macroadenoma in a 5-year-old: an early expression of multiple endocrine neoplasia type 1.</title>
        <authorList>
            <person name="Stratakis C.A."/>
            <person name="Schussheim D.H."/>
            <person name="Freedman S.M."/>
            <person name="Keil M.F."/>
            <person name="Pack S.D."/>
            <person name="Agarwal S.K."/>
            <person name="Skarulis M.C."/>
            <person name="Weil R.J."/>
            <person name="Lubensky I.A."/>
            <person name="Zhuang Z."/>
            <person name="Oldfield E.H."/>
            <person name="Marx S.J."/>
        </authorList>
    </citation>
    <scope>VARIANT MEN1 ASP-139</scope>
</reference>
<reference key="54">
    <citation type="journal article" date="2001" name="Hum. Mutat.">
        <title>Identification of three novel menin mutations (c.741delGTCA, c.1348T&gt;C, c.1785delA) in unrelated Italian families affected with multiple endocrine neoplasia type 1: additional information for mutational screening.</title>
        <authorList>
            <person name="Asteria C."/>
            <person name="Faglia G."/>
            <person name="Roncoroni R."/>
            <person name="Borretta G."/>
            <person name="Ribotto P."/>
            <person name="Beck-Peccoz P."/>
        </authorList>
    </citation>
    <scope>VARIANT MEN1 PRO-414</scope>
</reference>
<reference key="55">
    <citation type="journal article" date="2002" name="Hum. Mutat.">
        <title>Germline mutation profile of MEN1 in multiple endocrine neoplasia type 1: search for correlation between phenotype and the functional domains of the MEN1 protein.</title>
        <authorList>
            <person name="Wautot V."/>
            <person name="Vercherat C."/>
            <person name="Lespinasse J."/>
            <person name="Chambe B."/>
            <person name="Lenoir G.M."/>
            <person name="Zhang C.X."/>
            <person name="Porchet N."/>
            <person name="Cordier M."/>
            <person name="Beroud C."/>
            <person name="Calender A."/>
        </authorList>
    </citation>
    <scope>VARIANTS MEN1 TRP-39; ASP-42; LEU-98; PRO-160; THR-160; PHE-162; ASP-164; ARG-165; TYR-172; PRO-223; PHE-240; ARG-281; PRO-311; PRO-314; TYR-317; ARG-317; ASP-337; ARG-341; HIS-357; ASP-368; MET-372; ASN-418; CYS-527; ASN-555 AND ARG-555</scope>
</reference>
<reference key="56">
    <citation type="journal article" date="2002" name="Jpn. J. Clin. Oncol.">
        <title>A novel six-nucleotide insertion in exon 4 of the MEN1 gene, 878insCTGCAG, in three patients with familial insulinoma and primary hyperparathyroidism.</title>
        <authorList>
            <person name="Okamoto H."/>
            <person name="Tamada A."/>
            <person name="Hai N."/>
            <person name="Doi M."/>
            <person name="Uchimura I."/>
            <person name="Hirata Y."/>
            <person name="Kosugi S."/>
        </authorList>
    </citation>
    <scope>VARIANT MEN1 LEU-GLN-261 INS</scope>
</reference>
<reference key="57">
    <citation type="journal article" date="2002" name="J. Clin. Endocrinol. Metab.">
        <title>Frequent occurrence of an intron 4 mutation in multiple endocrine neoplasia type 1.</title>
        <authorList>
            <person name="Turner J.J.O."/>
            <person name="Leotlela P.D."/>
            <person name="Pannett A.A.J."/>
            <person name="Forbes S.A."/>
            <person name="Bassett J.H.D."/>
            <person name="Harding B."/>
            <person name="Christie P.T."/>
            <person name="Bowen-Jones D."/>
            <person name="Ellard S."/>
            <person name="Hattersley A."/>
            <person name="Jackson C.E."/>
            <person name="Pope R."/>
            <person name="Quarrell O.W."/>
            <person name="Trembath R."/>
            <person name="Thakker R.V."/>
        </authorList>
    </citation>
    <scope>VARIANTS MEN1 LYS-119 DEL; ILE-154; GLU-363 DEL AND ASN-418</scope>
</reference>
<reference key="58">
    <citation type="journal article" date="2002" name="World J. Surg.">
        <title>Genetic screening for MEN1 mutations in families presenting with familial primary hyperparathyroidism.</title>
        <authorList>
            <person name="Perrier N.D."/>
            <person name="Villablanca A."/>
            <person name="Larsson C."/>
            <person name="Wong M."/>
            <person name="Ituarte P."/>
            <person name="Teh B.T."/>
            <person name="Clark O.H."/>
        </authorList>
    </citation>
    <scope>VARIANT HIS-277</scope>
    <scope>INVOLVEMENT IN ISOLATED HYPERPARATHYROIDISM</scope>
</reference>
<reference key="59">
    <citation type="journal article" date="2003" name="Clin. Endocrinol. (Oxf.)">
        <title>Multiple endocrine neoplasia type 1 (MEN1) germline mutations in familial isolated primary hyperparathyroidism.</title>
        <authorList>
            <person name="Pannett A.A.J."/>
            <person name="Kennedy A.M."/>
            <person name="Turner J.J.O."/>
            <person name="Forbes S.A."/>
            <person name="Cavaco B.M."/>
            <person name="Bassett J.H.D."/>
            <person name="Cianferotti L."/>
            <person name="Harding B."/>
            <person name="Shine B."/>
            <person name="Flinter F."/>
            <person name="Maidment C.G.H."/>
            <person name="Trembath R."/>
            <person name="Thakker R.V."/>
        </authorList>
    </citation>
    <scope>VARIANTS MEN1 VAL-153 AND PRO-411</scope>
    <scope>INVOLVEMENT IN ISOLATED HYPERPARATHYROIDISM</scope>
</reference>
<reference key="60">
    <citation type="journal article" date="2003" name="Clin. Genet.">
        <title>Germline mutations of the MEN1 gene in Korean families with multiple endocrine neoplasia type 1 (MEN1) or MEN1-related disorders.</title>
        <authorList>
            <person name="Park J.-H."/>
            <person name="Kim I.-J."/>
            <person name="Kang H.C."/>
            <person name="Lee S.-H."/>
            <person name="Shin Y."/>
            <person name="Kim K.-H."/>
            <person name="Lim S.-B."/>
            <person name="Kang S.-B."/>
            <person name="Lee K.U."/>
            <person name="Kim S.Y."/>
            <person name="Lee M.-S."/>
            <person name="Lee M.-K."/>
            <person name="Park J.-H."/>
            <person name="Moon S.-D."/>
            <person name="Park J.-G."/>
        </authorList>
    </citation>
    <scope>VARIANT MEN1 PRO-325</scope>
</reference>
<reference key="61">
    <citation type="journal article" date="2003" name="Electrophoresis">
        <title>Efficient mutation detection in MEN1 gene using a combination of single-strand conformation polymorphism (MDGA) and heteroduplex analysis.</title>
        <authorList>
            <consortium name="Groupe d'etude des neoplasies endocriniennes multiples"/>
            <person name="Crepin M."/>
            <person name="Escande F."/>
            <person name="Pigny P."/>
            <person name="Buisine M.-P."/>
            <person name="Calender A."/>
            <person name="Porchet N."/>
            <person name="Odou M.-F."/>
        </authorList>
    </citation>
    <scope>VARIANTS MEN1 ARG-165; PRO-223; PHE-241; ARG-281; PRO-311; TYR-317; ASN-418 AND SER-540</scope>
</reference>
<reference key="62">
    <citation type="journal article" date="2003" name="Intern. Med.">
        <title>A novel missense mutation of the MEN1 gene in a multiple endocrine neoplasia type 1 patient associated with carcinoid syndrome.</title>
        <authorList>
            <person name="Ukita C."/>
            <person name="Yamaguchi M."/>
            <person name="Tanaka T."/>
            <person name="Shigeta H."/>
            <person name="Nishikawa M."/>
        </authorList>
    </citation>
    <scope>VARIANT MEN1 PRO-342</scope>
</reference>
<reference key="63">
    <citation type="journal article" date="2003" name="J. Med. Genet.">
        <title>Mutational and gross deletion study of the MEN1 gene and correlation with clinical features in Spanish patients.</title>
        <authorList>
            <person name="Cebrian A."/>
            <person name="Ruiz-Llorente S."/>
            <person name="Cascon A."/>
            <person name="Pollan M."/>
            <person name="Diez J.J."/>
            <person name="Pico A."/>
            <person name="Telleria D."/>
            <person name="Benitez J."/>
            <person name="Robledo M."/>
        </authorList>
    </citation>
    <scope>VARIANTS MEN1 LYS-45 AND PRO-139</scope>
    <scope>VARIANTS GLN-171 AND ALA-541</scope>
</reference>
<reference key="64">
    <citation type="journal article" date="2004" name="J. Hum. Genet.">
        <title>Unusual presentation of multiple endocrine neoplasia type 1 in a young woman with a novel mutation of the MEN1 gene.</title>
        <authorList>
            <person name="Balogh K."/>
            <person name="Patocs A."/>
            <person name="Majnik J."/>
            <person name="Varga F."/>
            <person name="Illyes G."/>
            <person name="Hunyady L."/>
            <person name="Racz K."/>
        </authorList>
    </citation>
    <scope>VARIANT GLN-171</scope>
</reference>
<reference key="65">
    <citation type="journal article" date="2005" name="Clin. Endocrinol. (Oxf.)">
        <title>Novel mutations in the MEN1 gene in subjects with multiple endocrine neoplasia-1.</title>
        <authorList>
            <person name="Jap T.-S."/>
            <person name="Chiu C.-Y."/>
            <person name="Won J.G.-S."/>
            <person name="Wu Y.-C."/>
            <person name="Chen H.-S."/>
        </authorList>
    </citation>
    <scope>VARIANTS MEN1 GLU-110 AND HIS-418</scope>
</reference>
<reference key="66">
    <citation type="journal article" date="2005" name="Genet. Med.">
        <title>Clinical testing for multiple endocrine neoplasia type 1 in a DNA diagnostic laboratory.</title>
        <authorList>
            <person name="Klein R.D."/>
            <person name="Salih S."/>
            <person name="Bessoni J."/>
            <person name="Bale A.E."/>
        </authorList>
    </citation>
    <scope>VARIANTS MEN1 VAL-144; ASP-156; ASP-179; LYS-179; ARG-181; MET-215; ARG-259; ARG-320; TRP-355; TYR-421; CYS-436 AND ARG-436</scope>
</reference>
<reference key="67">
    <citation type="journal article" date="2007" name="Clin. Endocrinol. (Oxf.)">
        <title>Identification of MEN1 and HRPT2 somatic mutations in paraffin-embedded (sporadic) parathyroid carcinomas.</title>
        <authorList>
            <person name="Haven C.J."/>
            <person name="van Puijenbroek M."/>
            <person name="Tan M.H."/>
            <person name="Teh B.T."/>
            <person name="Fleuren G.J."/>
            <person name="van Wezel T."/>
            <person name="Morreau H."/>
        </authorList>
    </citation>
    <scope>VARIANT PHE-215</scope>
    <scope>ASSOCIATION WITH PARATHYROID CARCINOMA</scope>
</reference>
<reference key="68">
    <citation type="journal article" date="2009" name="Anal. Chem.">
        <title>Lys-N and trypsin cover complementary parts of the phosphoproteome in a refined SCX-based approach.</title>
        <authorList>
            <person name="Gauci S."/>
            <person name="Helbig A.O."/>
            <person name="Slijper M."/>
            <person name="Krijgsveld J."/>
            <person name="Heck A.J."/>
            <person name="Mohammed S."/>
        </authorList>
    </citation>
    <scope>VARIANT [LARGE SCALE ANALYSIS] ALA-541</scope>
    <scope>IDENTIFICATION BY MASS SPECTROMETRY [LARGE SCALE ANALYSIS]</scope>
</reference>
<reference key="69">
    <citation type="journal article" date="2009" name="Sci. Signal.">
        <title>Quantitative phosphoproteomic analysis of T cell receptor signaling reveals system-wide modulation of protein-protein interactions.</title>
        <authorList>
            <person name="Mayya V."/>
            <person name="Lundgren D.H."/>
            <person name="Hwang S.-I."/>
            <person name="Rezaul K."/>
            <person name="Wu L."/>
            <person name="Eng J.K."/>
            <person name="Rodionov V."/>
            <person name="Han D.K."/>
        </authorList>
    </citation>
    <scope>VARIANT [LARGE SCALE ANALYSIS] ALA-541</scope>
    <scope>IDENTIFICATION BY MASS SPECTROMETRY [LARGE SCALE ANALYSIS]</scope>
    <source>
        <tissue>Leukemic T-cell</tissue>
    </source>
</reference>
<dbReference type="EMBL" id="U93236">
    <property type="protein sequence ID" value="AAC51228.1"/>
    <property type="molecule type" value="mRNA"/>
</dbReference>
<dbReference type="EMBL" id="U93237">
    <property type="protein sequence ID" value="AAC51229.1"/>
    <property type="molecule type" value="Genomic_DNA"/>
</dbReference>
<dbReference type="EMBL" id="U93237">
    <property type="protein sequence ID" value="AAC51230.1"/>
    <property type="molecule type" value="Genomic_DNA"/>
</dbReference>
<dbReference type="EMBL" id="AP001462">
    <property type="status" value="NOT_ANNOTATED_CDS"/>
    <property type="molecule type" value="Genomic_DNA"/>
</dbReference>
<dbReference type="EMBL" id="EF443091">
    <property type="protein sequence ID" value="ABQ12621.1"/>
    <property type="molecule type" value="Genomic_DNA"/>
</dbReference>
<dbReference type="EMBL" id="EF443092">
    <property type="protein sequence ID" value="ABQ12622.1"/>
    <property type="molecule type" value="Genomic_DNA"/>
</dbReference>
<dbReference type="EMBL" id="EF443093">
    <property type="protein sequence ID" value="ABQ12623.1"/>
    <property type="molecule type" value="Genomic_DNA"/>
</dbReference>
<dbReference type="EMBL" id="EF443094">
    <property type="protein sequence ID" value="ABQ12624.1"/>
    <property type="status" value="ALT_FRAME"/>
    <property type="molecule type" value="Genomic_DNA"/>
</dbReference>
<dbReference type="EMBL" id="EF443095">
    <property type="protein sequence ID" value="ABQ12625.1"/>
    <property type="molecule type" value="Genomic_DNA"/>
</dbReference>
<dbReference type="EMBL" id="EF443096">
    <property type="protein sequence ID" value="ABQ12626.1"/>
    <property type="molecule type" value="Genomic_DNA"/>
</dbReference>
<dbReference type="EMBL" id="EF443097">
    <property type="protein sequence ID" value="ABQ12627.1"/>
    <property type="status" value="ALT_FRAME"/>
    <property type="molecule type" value="Genomic_DNA"/>
</dbReference>
<dbReference type="EMBL" id="BC002544">
    <property type="protein sequence ID" value="AAH02544.1"/>
    <property type="molecule type" value="mRNA"/>
</dbReference>
<dbReference type="EMBL" id="BC002664">
    <property type="protein sequence ID" value="AAH02664.2"/>
    <property type="molecule type" value="mRNA"/>
</dbReference>
<dbReference type="CCDS" id="CCDS31600.1">
    <molecule id="O00255-2"/>
</dbReference>
<dbReference type="CCDS" id="CCDS8083.1">
    <molecule id="O00255-1"/>
</dbReference>
<dbReference type="RefSeq" id="NP_000235.2">
    <molecule id="O00255-1"/>
    <property type="nucleotide sequence ID" value="NM_000244.3"/>
</dbReference>
<dbReference type="RefSeq" id="NP_001357188.2">
    <molecule id="O00255-2"/>
    <property type="nucleotide sequence ID" value="NM_001370259.2"/>
</dbReference>
<dbReference type="RefSeq" id="NP_001357189.2">
    <molecule id="O00255-2"/>
    <property type="nucleotide sequence ID" value="NM_001370260.2"/>
</dbReference>
<dbReference type="RefSeq" id="NP_001357190.2">
    <molecule id="O00255-2"/>
    <property type="nucleotide sequence ID" value="NM_001370261.2"/>
</dbReference>
<dbReference type="RefSeq" id="NP_001394074.1">
    <molecule id="O00255-1"/>
    <property type="nucleotide sequence ID" value="NM_001407145.1"/>
</dbReference>
<dbReference type="RefSeq" id="NP_001394075.1">
    <molecule id="O00255-2"/>
    <property type="nucleotide sequence ID" value="NM_001407146.1"/>
</dbReference>
<dbReference type="RefSeq" id="NP_001394076.1">
    <molecule id="O00255-2"/>
    <property type="nucleotide sequence ID" value="NM_001407147.1"/>
</dbReference>
<dbReference type="RefSeq" id="NP_570711.2">
    <molecule id="O00255-2"/>
    <property type="nucleotide sequence ID" value="NM_130799.3"/>
</dbReference>
<dbReference type="RefSeq" id="NP_570712.2">
    <molecule id="O00255-1"/>
    <property type="nucleotide sequence ID" value="NM_130800.3"/>
</dbReference>
<dbReference type="RefSeq" id="NP_570713.2">
    <molecule id="O00255-1"/>
    <property type="nucleotide sequence ID" value="NM_130801.3"/>
</dbReference>
<dbReference type="RefSeq" id="NP_570714.2">
    <molecule id="O00255-1"/>
    <property type="nucleotide sequence ID" value="NM_130802.3"/>
</dbReference>
<dbReference type="RefSeq" id="NP_570715.2">
    <molecule id="O00255-1"/>
    <property type="nucleotide sequence ID" value="NM_130803.3"/>
</dbReference>
<dbReference type="RefSeq" id="NP_570716.2">
    <molecule id="O00255-1"/>
    <property type="nucleotide sequence ID" value="NM_130804.3"/>
</dbReference>
<dbReference type="RefSeq" id="XP_005274058.1">
    <property type="nucleotide sequence ID" value="XM_005274001.4"/>
</dbReference>
<dbReference type="RefSeq" id="XP_016873258.1">
    <property type="nucleotide sequence ID" value="XM_017017769.1"/>
</dbReference>
<dbReference type="RefSeq" id="XP_016873259.1">
    <property type="nucleotide sequence ID" value="XM_017017770.1"/>
</dbReference>
<dbReference type="PDB" id="3U84">
    <property type="method" value="X-ray"/>
    <property type="resolution" value="2.50 A"/>
    <property type="chains" value="A/B=2-459, A/B=520-610"/>
</dbReference>
<dbReference type="PDB" id="3U85">
    <property type="method" value="X-ray"/>
    <property type="resolution" value="3.00 A"/>
    <property type="chains" value="A=2-459, A=520-610"/>
</dbReference>
<dbReference type="PDB" id="3U86">
    <property type="method" value="X-ray"/>
    <property type="resolution" value="2.84 A"/>
    <property type="chains" value="A=2-459, A=520-610"/>
</dbReference>
<dbReference type="PDB" id="3U88">
    <property type="method" value="X-ray"/>
    <property type="resolution" value="3.00 A"/>
    <property type="chains" value="A/B=2-459, A/B=520-610"/>
</dbReference>
<dbReference type="PDB" id="4GPQ">
    <property type="method" value="X-ray"/>
    <property type="resolution" value="1.46 A"/>
    <property type="chains" value="A=1-53, A=74-386, A=399-459, A=537-593"/>
</dbReference>
<dbReference type="PDB" id="4GQ3">
    <property type="method" value="X-ray"/>
    <property type="resolution" value="1.56 A"/>
    <property type="chains" value="A=1-53, A=74-386, A=399-459, A=537-593"/>
</dbReference>
<dbReference type="PDB" id="4GQ4">
    <property type="method" value="X-ray"/>
    <property type="resolution" value="1.27 A"/>
    <property type="chains" value="A=1-53, A=74-386, A=399-459, A=537-593"/>
</dbReference>
<dbReference type="PDB" id="4GQ6">
    <property type="method" value="X-ray"/>
    <property type="resolution" value="1.55 A"/>
    <property type="chains" value="A=1-53, A=74-386, A=399-459, A=537-593"/>
</dbReference>
<dbReference type="PDB" id="4I80">
    <property type="method" value="X-ray"/>
    <property type="resolution" value="3.10 A"/>
    <property type="chains" value="A=2-458, A=520-610"/>
</dbReference>
<dbReference type="PDB" id="4OG3">
    <property type="method" value="X-ray"/>
    <property type="resolution" value="2.01 A"/>
    <property type="chains" value="A=1-53, A=74-386, A=399-459, A=549-593"/>
</dbReference>
<dbReference type="PDB" id="4OG4">
    <property type="method" value="X-ray"/>
    <property type="resolution" value="1.45 A"/>
    <property type="chains" value="A=1-53, A=74-386, A=399-459, A=549-593"/>
</dbReference>
<dbReference type="PDB" id="4OG5">
    <property type="method" value="X-ray"/>
    <property type="resolution" value="1.63 A"/>
    <property type="chains" value="A=1-53, A=74-386, A=399-459, A=549-593"/>
</dbReference>
<dbReference type="PDB" id="4OG6">
    <property type="method" value="X-ray"/>
    <property type="resolution" value="1.49 A"/>
    <property type="chains" value="A=1-53, A=74-386, A=399-459, A=549-593"/>
</dbReference>
<dbReference type="PDB" id="4OG7">
    <property type="method" value="X-ray"/>
    <property type="resolution" value="2.08 A"/>
    <property type="chains" value="A=1-53, A=74-386, A=399-459, A=549-593"/>
</dbReference>
<dbReference type="PDB" id="4OG8">
    <property type="method" value="X-ray"/>
    <property type="resolution" value="1.53 A"/>
    <property type="chains" value="A=1-53, A=74-386, A=399-459, A=549-593"/>
</dbReference>
<dbReference type="PDB" id="4X5Y">
    <property type="method" value="X-ray"/>
    <property type="resolution" value="1.59 A"/>
    <property type="chains" value="A=1-53, A=74-386, A=399-459, A=537-593"/>
</dbReference>
<dbReference type="PDB" id="4X5Z">
    <property type="method" value="X-ray"/>
    <property type="resolution" value="1.86 A"/>
    <property type="chains" value="A=1-53, A=74-386, A=399-459, A=537-593"/>
</dbReference>
<dbReference type="PDB" id="5DB0">
    <property type="method" value="X-ray"/>
    <property type="resolution" value="1.50 A"/>
    <property type="chains" value="A=1-53, A=74-386, A=399-459, A=537-593"/>
</dbReference>
<dbReference type="PDB" id="5DB1">
    <property type="method" value="X-ray"/>
    <property type="resolution" value="1.86 A"/>
    <property type="chains" value="A=1-53, A=74-386, A=399-459, A=537-593"/>
</dbReference>
<dbReference type="PDB" id="5DB2">
    <property type="method" value="X-ray"/>
    <property type="resolution" value="1.54 A"/>
    <property type="chains" value="A=1-53, A=74-386, A=399-459, A=537-593"/>
</dbReference>
<dbReference type="PDB" id="5DB3">
    <property type="method" value="X-ray"/>
    <property type="resolution" value="1.71 A"/>
    <property type="chains" value="A=1-53, A=74-386, A=399-459, A=537-593"/>
</dbReference>
<dbReference type="PDB" id="5DD9">
    <property type="method" value="X-ray"/>
    <property type="resolution" value="1.62 A"/>
    <property type="chains" value="A=1-53, A=74-386, A=399-459, A=537-593"/>
</dbReference>
<dbReference type="PDB" id="5DDA">
    <property type="method" value="X-ray"/>
    <property type="resolution" value="1.83 A"/>
    <property type="chains" value="A=1-53, A=74-386, A=399-459, A=537-593"/>
</dbReference>
<dbReference type="PDB" id="5DDB">
    <property type="method" value="X-ray"/>
    <property type="resolution" value="1.54 A"/>
    <property type="chains" value="A=1-53, A=74-386, A=399-459, A=537-593"/>
</dbReference>
<dbReference type="PDB" id="5DDC">
    <property type="method" value="X-ray"/>
    <property type="resolution" value="1.62 A"/>
    <property type="chains" value="A=1-53, A=74-386, A=399-459, A=537-593"/>
</dbReference>
<dbReference type="PDB" id="5DDD">
    <property type="method" value="X-ray"/>
    <property type="resolution" value="2.14 A"/>
    <property type="chains" value="A=1-53, A=74-386, A=399-459, A=537-593"/>
</dbReference>
<dbReference type="PDB" id="5DDE">
    <property type="method" value="X-ray"/>
    <property type="resolution" value="1.78 A"/>
    <property type="chains" value="A=1-53, A=74-386, A=399-459, A=537-593"/>
</dbReference>
<dbReference type="PDB" id="5DDF">
    <property type="method" value="X-ray"/>
    <property type="resolution" value="1.66 A"/>
    <property type="chains" value="A=1-53, A=74-386, A=399-459, A=537-593"/>
</dbReference>
<dbReference type="PDB" id="6B41">
    <property type="method" value="X-ray"/>
    <property type="resolution" value="2.61 A"/>
    <property type="chains" value="A=2-459, A=520-610"/>
</dbReference>
<dbReference type="PDB" id="6BXH">
    <property type="method" value="X-ray"/>
    <property type="resolution" value="2.44 A"/>
    <property type="chains" value="A=1-386, A=399-459, A=537-593"/>
</dbReference>
<dbReference type="PDB" id="6BXY">
    <property type="method" value="X-ray"/>
    <property type="resolution" value="1.82 A"/>
    <property type="chains" value="A=1-53, A=74-386, A=399-459, A=537-593"/>
</dbReference>
<dbReference type="PDB" id="6BY8">
    <property type="method" value="X-ray"/>
    <property type="resolution" value="1.90 A"/>
    <property type="chains" value="A=1-53, A=74-386, A=399-459, A=537-593"/>
</dbReference>
<dbReference type="PDB" id="6E1A">
    <property type="method" value="X-ray"/>
    <property type="resolution" value="3.10 A"/>
    <property type="chains" value="A=2-459, A=520-610"/>
</dbReference>
<dbReference type="PDB" id="6O5I">
    <property type="method" value="X-ray"/>
    <property type="resolution" value="1.24 A"/>
    <property type="chains" value="A=1-53, A=74-386, A=399-459, A=537-593"/>
</dbReference>
<dbReference type="PDB" id="6OPJ">
    <property type="method" value="X-ray"/>
    <property type="resolution" value="1.50 A"/>
    <property type="chains" value="A=1-53, A=74-386, A=399-459, A=537-593"/>
</dbReference>
<dbReference type="PDB" id="6PKC">
    <property type="method" value="X-ray"/>
    <property type="resolution" value="1.90 A"/>
    <property type="chains" value="A/B=2-457, A/B=552-583"/>
</dbReference>
<dbReference type="PDB" id="6S2K">
    <property type="method" value="X-ray"/>
    <property type="resolution" value="3.10 A"/>
    <property type="chains" value="A/B=1-459, A/B=520-584"/>
</dbReference>
<dbReference type="PDB" id="6WNH">
    <property type="method" value="X-ray"/>
    <property type="resolution" value="2.10 A"/>
    <property type="chains" value="A=2-459, A=520-610"/>
</dbReference>
<dbReference type="PDB" id="7M4T">
    <property type="method" value="X-ray"/>
    <property type="resolution" value="2.74 A"/>
    <property type="chains" value="A=2-459, A=520-610"/>
</dbReference>
<dbReference type="PDB" id="7O9T">
    <property type="method" value="X-ray"/>
    <property type="resolution" value="2.16 A"/>
    <property type="chains" value="A=1-53, A=74-386, A=398-459, A=520-584"/>
</dbReference>
<dbReference type="PDB" id="7O9X">
    <property type="method" value="X-ray"/>
    <property type="resolution" value="2.30 A"/>
    <property type="chains" value="A=1-53, A=74-386, A=398-459, A=520-584"/>
</dbReference>
<dbReference type="PDB" id="7O9Z">
    <property type="method" value="X-ray"/>
    <property type="resolution" value="1.98 A"/>
    <property type="chains" value="A=1-53, A=74-386, A=398-459, A=520-584"/>
</dbReference>
<dbReference type="PDB" id="7OA9">
    <property type="method" value="X-ray"/>
    <property type="resolution" value="2.10 A"/>
    <property type="chains" value="A=1-53, A=74-459, A=520-584"/>
</dbReference>
<dbReference type="PDB" id="7UJ4">
    <property type="method" value="X-ray"/>
    <property type="resolution" value="1.96 A"/>
    <property type="chains" value="A/B=1-462"/>
</dbReference>
<dbReference type="PDB" id="8E90">
    <property type="method" value="X-ray"/>
    <property type="resolution" value="1.85 A"/>
    <property type="chains" value="A/B=1-462"/>
</dbReference>
<dbReference type="PDB" id="8GPN">
    <property type="method" value="EM"/>
    <property type="resolution" value="3.20 A"/>
    <property type="chains" value="K=1-610"/>
</dbReference>
<dbReference type="PDB" id="8IG0">
    <property type="method" value="X-ray"/>
    <property type="resolution" value="2.60 A"/>
    <property type="chains" value="A/B/C/D=1-459, A/B/C/D=520-610"/>
</dbReference>
<dbReference type="PDB" id="8VA5">
    <property type="method" value="X-ray"/>
    <property type="resolution" value="1.30 A"/>
    <property type="chains" value="A=1-593"/>
</dbReference>
<dbReference type="PDB" id="8VA6">
    <property type="method" value="X-ray"/>
    <property type="resolution" value="1.57 A"/>
    <property type="chains" value="A=1-593"/>
</dbReference>
<dbReference type="PDB" id="9C92">
    <property type="method" value="X-ray"/>
    <property type="resolution" value="1.90 A"/>
    <property type="chains" value="A/B=2-583"/>
</dbReference>
<dbReference type="PDB" id="9C93">
    <property type="method" value="X-ray"/>
    <property type="resolution" value="1.85 A"/>
    <property type="chains" value="A/B=2-583"/>
</dbReference>
<dbReference type="PDB" id="9C94">
    <property type="method" value="X-ray"/>
    <property type="resolution" value="1.98 A"/>
    <property type="chains" value="A/B=2-583"/>
</dbReference>
<dbReference type="PDBsum" id="3U84"/>
<dbReference type="PDBsum" id="3U85"/>
<dbReference type="PDBsum" id="3U86"/>
<dbReference type="PDBsum" id="3U88"/>
<dbReference type="PDBsum" id="4GPQ"/>
<dbReference type="PDBsum" id="4GQ3"/>
<dbReference type="PDBsum" id="4GQ4"/>
<dbReference type="PDBsum" id="4GQ6"/>
<dbReference type="PDBsum" id="4I80"/>
<dbReference type="PDBsum" id="4OG3"/>
<dbReference type="PDBsum" id="4OG4"/>
<dbReference type="PDBsum" id="4OG5"/>
<dbReference type="PDBsum" id="4OG6"/>
<dbReference type="PDBsum" id="4OG7"/>
<dbReference type="PDBsum" id="4OG8"/>
<dbReference type="PDBsum" id="4X5Y"/>
<dbReference type="PDBsum" id="4X5Z"/>
<dbReference type="PDBsum" id="5DB0"/>
<dbReference type="PDBsum" id="5DB1"/>
<dbReference type="PDBsum" id="5DB2"/>
<dbReference type="PDBsum" id="5DB3"/>
<dbReference type="PDBsum" id="5DD9"/>
<dbReference type="PDBsum" id="5DDA"/>
<dbReference type="PDBsum" id="5DDB"/>
<dbReference type="PDBsum" id="5DDC"/>
<dbReference type="PDBsum" id="5DDD"/>
<dbReference type="PDBsum" id="5DDE"/>
<dbReference type="PDBsum" id="5DDF"/>
<dbReference type="PDBsum" id="6B41"/>
<dbReference type="PDBsum" id="6BXH"/>
<dbReference type="PDBsum" id="6BXY"/>
<dbReference type="PDBsum" id="6BY8"/>
<dbReference type="PDBsum" id="6E1A"/>
<dbReference type="PDBsum" id="6O5I"/>
<dbReference type="PDBsum" id="6OPJ"/>
<dbReference type="PDBsum" id="6PKC"/>
<dbReference type="PDBsum" id="6S2K"/>
<dbReference type="PDBsum" id="6WNH"/>
<dbReference type="PDBsum" id="7M4T"/>
<dbReference type="PDBsum" id="7O9T"/>
<dbReference type="PDBsum" id="7O9X"/>
<dbReference type="PDBsum" id="7O9Z"/>
<dbReference type="PDBsum" id="7OA9"/>
<dbReference type="PDBsum" id="7UJ4"/>
<dbReference type="PDBsum" id="8E90"/>
<dbReference type="PDBsum" id="8GPN"/>
<dbReference type="PDBsum" id="8IG0"/>
<dbReference type="PDBsum" id="8VA5"/>
<dbReference type="PDBsum" id="8VA6"/>
<dbReference type="PDBsum" id="9C92"/>
<dbReference type="PDBsum" id="9C93"/>
<dbReference type="PDBsum" id="9C94"/>
<dbReference type="EMDB" id="EMD-34195"/>
<dbReference type="SMR" id="O00255"/>
<dbReference type="BioGRID" id="110384">
    <property type="interactions" value="1047"/>
</dbReference>
<dbReference type="ComplexPortal" id="CPX-497">
    <property type="entry name" value="Menin-JUND transcription inhibition complex"/>
</dbReference>
<dbReference type="ComplexPortal" id="CPX-5850">
    <property type="entry name" value="Histone-lysine N-methyltransferase complex, KMT2A variant"/>
</dbReference>
<dbReference type="ComplexPortal" id="CPX-7062">
    <property type="entry name" value="Histone-lysine N-methyltransferase complex, KMT2B variant"/>
</dbReference>
<dbReference type="CORUM" id="O00255"/>
<dbReference type="DIP" id="DIP-24236N"/>
<dbReference type="FunCoup" id="O00255">
    <property type="interactions" value="2164"/>
</dbReference>
<dbReference type="IntAct" id="O00255">
    <property type="interactions" value="43"/>
</dbReference>
<dbReference type="MINT" id="O00255"/>
<dbReference type="STRING" id="9606.ENSP00000337088"/>
<dbReference type="BindingDB" id="O00255"/>
<dbReference type="ChEMBL" id="CHEMBL1615381"/>
<dbReference type="DrugBank" id="DB18515">
    <property type="generic name" value="Revumenib"/>
</dbReference>
<dbReference type="DrugCentral" id="O00255"/>
<dbReference type="GlyGen" id="O00255">
    <property type="glycosylation" value="2 sites"/>
</dbReference>
<dbReference type="iPTMnet" id="O00255"/>
<dbReference type="PhosphoSitePlus" id="O00255"/>
<dbReference type="BioMuta" id="MEN1"/>
<dbReference type="jPOST" id="O00255"/>
<dbReference type="MassIVE" id="O00255"/>
<dbReference type="PaxDb" id="9606-ENSP00000337088"/>
<dbReference type="PeptideAtlas" id="O00255"/>
<dbReference type="ProteomicsDB" id="47808">
    <molecule id="O00255-1"/>
</dbReference>
<dbReference type="ProteomicsDB" id="47809">
    <molecule id="O00255-2"/>
</dbReference>
<dbReference type="ProteomicsDB" id="47810">
    <molecule id="O00255-3"/>
</dbReference>
<dbReference type="Pumba" id="O00255"/>
<dbReference type="ABCD" id="O00255">
    <property type="antibodies" value="2 sequenced antibodies"/>
</dbReference>
<dbReference type="Antibodypedia" id="15626">
    <property type="antibodies" value="544 antibodies from 44 providers"/>
</dbReference>
<dbReference type="CPTC" id="O00255">
    <property type="antibodies" value="1 antibody"/>
</dbReference>
<dbReference type="DNASU" id="4221"/>
<dbReference type="Ensembl" id="ENST00000312049.11">
    <molecule id="O00255-2"/>
    <property type="protein sequence ID" value="ENSP00000308975.6"/>
    <property type="gene ID" value="ENSG00000133895.19"/>
</dbReference>
<dbReference type="Ensembl" id="ENST00000315422.9">
    <molecule id="O00255-2"/>
    <property type="protein sequence ID" value="ENSP00000323747.4"/>
    <property type="gene ID" value="ENSG00000133895.19"/>
</dbReference>
<dbReference type="Ensembl" id="ENST00000377313.7">
    <molecule id="O00255-1"/>
    <property type="protein sequence ID" value="ENSP00000366530.1"/>
    <property type="gene ID" value="ENSG00000133895.19"/>
</dbReference>
<dbReference type="Ensembl" id="ENST00000377326.7">
    <molecule id="O00255-2"/>
    <property type="protein sequence ID" value="ENSP00000366543.3"/>
    <property type="gene ID" value="ENSG00000133895.19"/>
</dbReference>
<dbReference type="Ensembl" id="ENST00000413626.2">
    <molecule id="O00255-2"/>
    <property type="protein sequence ID" value="ENSP00000411218.2"/>
    <property type="gene ID" value="ENSG00000133895.19"/>
</dbReference>
<dbReference type="Ensembl" id="ENST00000424912.2">
    <molecule id="O00255-2"/>
    <property type="protein sequence ID" value="ENSP00000388016.2"/>
    <property type="gene ID" value="ENSG00000133895.19"/>
</dbReference>
<dbReference type="Ensembl" id="ENST00000429702.6">
    <molecule id="O00255-2"/>
    <property type="protein sequence ID" value="ENSP00000402752.2"/>
    <property type="gene ID" value="ENSG00000133895.19"/>
</dbReference>
<dbReference type="Ensembl" id="ENST00000440873.6">
    <molecule id="O00255-2"/>
    <property type="protein sequence ID" value="ENSP00000413944.2"/>
    <property type="gene ID" value="ENSG00000133895.19"/>
</dbReference>
<dbReference type="Ensembl" id="ENST00000450708.7">
    <molecule id="O00255-2"/>
    <property type="protein sequence ID" value="ENSP00000394933.3"/>
    <property type="gene ID" value="ENSG00000133895.19"/>
</dbReference>
<dbReference type="Ensembl" id="ENST00000710881.1">
    <molecule id="O00255-1"/>
    <property type="protein sequence ID" value="ENSP00000518530.1"/>
    <property type="gene ID" value="ENSG00000133895.19"/>
</dbReference>
<dbReference type="GeneID" id="4221"/>
<dbReference type="KEGG" id="hsa:4221"/>
<dbReference type="MANE-Select" id="ENST00000450708.7">
    <property type="protein sequence ID" value="ENSP00000394933.3"/>
    <property type="RefSeq nucleotide sequence ID" value="NM_001370259.2"/>
    <property type="RefSeq protein sequence ID" value="NP_001357188.2"/>
</dbReference>
<dbReference type="UCSC" id="uc001obl.4">
    <molecule id="O00255-2"/>
    <property type="organism name" value="human"/>
</dbReference>
<dbReference type="AGR" id="HGNC:7010"/>
<dbReference type="CTD" id="4221"/>
<dbReference type="DisGeNET" id="4221"/>
<dbReference type="GeneCards" id="MEN1"/>
<dbReference type="GeneReviews" id="MEN1"/>
<dbReference type="HGNC" id="HGNC:7010">
    <property type="gene designation" value="MEN1"/>
</dbReference>
<dbReference type="HPA" id="ENSG00000133895">
    <property type="expression patterns" value="Low tissue specificity"/>
</dbReference>
<dbReference type="MalaCards" id="MEN1"/>
<dbReference type="MIM" id="131100">
    <property type="type" value="phenotype"/>
</dbReference>
<dbReference type="MIM" id="613733">
    <property type="type" value="gene"/>
</dbReference>
<dbReference type="neXtProt" id="NX_O00255"/>
<dbReference type="OpenTargets" id="ENSG00000133895"/>
<dbReference type="Orphanet" id="99879">
    <property type="disease" value="Familial isolated hyperparathyroidism"/>
</dbReference>
<dbReference type="Orphanet" id="97279">
    <property type="disease" value="Insulinoma"/>
</dbReference>
<dbReference type="Orphanet" id="652">
    <property type="disease" value="Multiple endocrine neoplasia type 1"/>
</dbReference>
<dbReference type="Orphanet" id="314790">
    <property type="disease" value="Null pituitary adenoma"/>
</dbReference>
<dbReference type="Orphanet" id="99725">
    <property type="disease" value="Pituitary gigantism"/>
</dbReference>
<dbReference type="Orphanet" id="2965">
    <property type="disease" value="Prolactinoma"/>
</dbReference>
<dbReference type="Orphanet" id="314786">
    <property type="disease" value="Silent pituitary adenoma"/>
</dbReference>
<dbReference type="PharmGKB" id="PA30746"/>
<dbReference type="VEuPathDB" id="HostDB:ENSG00000133895"/>
<dbReference type="eggNOG" id="ENOG502QUYK">
    <property type="taxonomic scope" value="Eukaryota"/>
</dbReference>
<dbReference type="GeneTree" id="ENSGT00390000014237"/>
<dbReference type="HOGENOM" id="CLU_018646_0_0_1"/>
<dbReference type="InParanoid" id="O00255"/>
<dbReference type="OrthoDB" id="5962932at2759"/>
<dbReference type="PAN-GO" id="O00255">
    <property type="GO annotations" value="8 GO annotations based on evolutionary models"/>
</dbReference>
<dbReference type="PhylomeDB" id="O00255"/>
<dbReference type="TreeFam" id="TF323888"/>
<dbReference type="PathwayCommons" id="O00255"/>
<dbReference type="Reactome" id="R-HSA-201722">
    <property type="pathway name" value="Formation of the beta-catenin:TCF transactivating complex"/>
</dbReference>
<dbReference type="Reactome" id="R-HSA-2173796">
    <property type="pathway name" value="SMAD2/SMAD3:SMAD4 heterotrimer regulates transcription"/>
</dbReference>
<dbReference type="Reactome" id="R-HSA-3769402">
    <property type="pathway name" value="Deactivation of the beta-catenin transactivating complex"/>
</dbReference>
<dbReference type="Reactome" id="R-HSA-381426">
    <property type="pathway name" value="Regulation of Insulin-like Growth Factor (IGF) transport and uptake by Insulin-like Growth Factor Binding Proteins (IGFBPs)"/>
</dbReference>
<dbReference type="Reactome" id="R-HSA-5626467">
    <property type="pathway name" value="RHO GTPases activate IQGAPs"/>
</dbReference>
<dbReference type="Reactome" id="R-HSA-8957275">
    <property type="pathway name" value="Post-translational protein phosphorylation"/>
</dbReference>
<dbReference type="Reactome" id="R-HSA-9772755">
    <property type="pathway name" value="Formation of WDR5-containing histone-modifying complexes"/>
</dbReference>
<dbReference type="SignaLink" id="O00255"/>
<dbReference type="SIGNOR" id="O00255"/>
<dbReference type="BioGRID-ORCS" id="4221">
    <property type="hits" value="182 hits in 1189 CRISPR screens"/>
</dbReference>
<dbReference type="ChiTaRS" id="MEN1">
    <property type="organism name" value="human"/>
</dbReference>
<dbReference type="EvolutionaryTrace" id="O00255"/>
<dbReference type="GeneWiki" id="MEN1"/>
<dbReference type="GenomeRNAi" id="4221"/>
<dbReference type="Pharos" id="O00255">
    <property type="development level" value="Tchem"/>
</dbReference>
<dbReference type="PRO" id="PR:O00255"/>
<dbReference type="Proteomes" id="UP000005640">
    <property type="component" value="Chromosome 11"/>
</dbReference>
<dbReference type="RNAct" id="O00255">
    <property type="molecule type" value="protein"/>
</dbReference>
<dbReference type="Bgee" id="ENSG00000133895">
    <property type="expression patterns" value="Expressed in granulocyte and 181 other cell types or tissues"/>
</dbReference>
<dbReference type="ExpressionAtlas" id="O00255">
    <property type="expression patterns" value="baseline and differential"/>
</dbReference>
<dbReference type="GO" id="GO:0000785">
    <property type="term" value="C:chromatin"/>
    <property type="evidence" value="ECO:0000314"/>
    <property type="project" value="UniProtKB"/>
</dbReference>
<dbReference type="GO" id="GO:0000781">
    <property type="term" value="C:chromosome, telomeric region"/>
    <property type="evidence" value="ECO:0000250"/>
    <property type="project" value="BHF-UCL"/>
</dbReference>
<dbReference type="GO" id="GO:0032154">
    <property type="term" value="C:cleavage furrow"/>
    <property type="evidence" value="ECO:0000314"/>
    <property type="project" value="UniProtKB"/>
</dbReference>
<dbReference type="GO" id="GO:0005737">
    <property type="term" value="C:cytoplasm"/>
    <property type="evidence" value="ECO:0000314"/>
    <property type="project" value="UniProtKB"/>
</dbReference>
<dbReference type="GO" id="GO:0005829">
    <property type="term" value="C:cytosol"/>
    <property type="evidence" value="ECO:0000314"/>
    <property type="project" value="HPA"/>
</dbReference>
<dbReference type="GO" id="GO:0005788">
    <property type="term" value="C:endoplasmic reticulum lumen"/>
    <property type="evidence" value="ECO:0000304"/>
    <property type="project" value="Reactome"/>
</dbReference>
<dbReference type="GO" id="GO:0035097">
    <property type="term" value="C:histone methyltransferase complex"/>
    <property type="evidence" value="ECO:0000314"/>
    <property type="project" value="MGI"/>
</dbReference>
<dbReference type="GO" id="GO:0071339">
    <property type="term" value="C:MLL1 complex"/>
    <property type="evidence" value="ECO:0000353"/>
    <property type="project" value="ComplexPortal"/>
</dbReference>
<dbReference type="GO" id="GO:0044665">
    <property type="term" value="C:MLL1/2 complex"/>
    <property type="evidence" value="ECO:0000353"/>
    <property type="project" value="ComplexPortal"/>
</dbReference>
<dbReference type="GO" id="GO:0016363">
    <property type="term" value="C:nuclear matrix"/>
    <property type="evidence" value="ECO:0000314"/>
    <property type="project" value="UniProtKB"/>
</dbReference>
<dbReference type="GO" id="GO:0005654">
    <property type="term" value="C:nucleoplasm"/>
    <property type="evidence" value="ECO:0000314"/>
    <property type="project" value="HPA"/>
</dbReference>
<dbReference type="GO" id="GO:0005634">
    <property type="term" value="C:nucleus"/>
    <property type="evidence" value="ECO:0000314"/>
    <property type="project" value="UniProtKB"/>
</dbReference>
<dbReference type="GO" id="GO:0032991">
    <property type="term" value="C:protein-containing complex"/>
    <property type="evidence" value="ECO:0000314"/>
    <property type="project" value="UniProtKB"/>
</dbReference>
<dbReference type="GO" id="GO:0017053">
    <property type="term" value="C:transcription repressor complex"/>
    <property type="evidence" value="ECO:0000353"/>
    <property type="project" value="ComplexPortal"/>
</dbReference>
<dbReference type="GO" id="GO:0003682">
    <property type="term" value="F:chromatin binding"/>
    <property type="evidence" value="ECO:0000318"/>
    <property type="project" value="GO_Central"/>
</dbReference>
<dbReference type="GO" id="GO:0003690">
    <property type="term" value="F:double-stranded DNA binding"/>
    <property type="evidence" value="ECO:0000314"/>
    <property type="project" value="UniProtKB"/>
</dbReference>
<dbReference type="GO" id="GO:0000400">
    <property type="term" value="F:four-way junction DNA binding"/>
    <property type="evidence" value="ECO:0000314"/>
    <property type="project" value="UniProtKB"/>
</dbReference>
<dbReference type="GO" id="GO:0051219">
    <property type="term" value="F:phosphoprotein binding"/>
    <property type="evidence" value="ECO:0000353"/>
    <property type="project" value="UniProtKB"/>
</dbReference>
<dbReference type="GO" id="GO:0030674">
    <property type="term" value="F:protein-macromolecule adaptor activity"/>
    <property type="evidence" value="ECO:0000314"/>
    <property type="project" value="UniProtKB"/>
</dbReference>
<dbReference type="GO" id="GO:0070412">
    <property type="term" value="F:R-SMAD binding"/>
    <property type="evidence" value="ECO:0000353"/>
    <property type="project" value="BHF-UCL"/>
</dbReference>
<dbReference type="GO" id="GO:0000976">
    <property type="term" value="F:transcription cis-regulatory region binding"/>
    <property type="evidence" value="ECO:0000314"/>
    <property type="project" value="UniProtKB"/>
</dbReference>
<dbReference type="GO" id="GO:0000403">
    <property type="term" value="F:Y-form DNA binding"/>
    <property type="evidence" value="ECO:0000314"/>
    <property type="project" value="UniProtKB"/>
</dbReference>
<dbReference type="GO" id="GO:0006974">
    <property type="term" value="P:DNA damage response"/>
    <property type="evidence" value="ECO:0000314"/>
    <property type="project" value="UniProtKB"/>
</dbReference>
<dbReference type="GO" id="GO:0006281">
    <property type="term" value="P:DNA repair"/>
    <property type="evidence" value="ECO:0000303"/>
    <property type="project" value="UniProtKB"/>
</dbReference>
<dbReference type="GO" id="GO:0000165">
    <property type="term" value="P:MAPK cascade"/>
    <property type="evidence" value="ECO:0000314"/>
    <property type="project" value="UniProtKB"/>
</dbReference>
<dbReference type="GO" id="GO:0045786">
    <property type="term" value="P:negative regulation of cell cycle"/>
    <property type="evidence" value="ECO:0000314"/>
    <property type="project" value="UniProtKB"/>
</dbReference>
<dbReference type="GO" id="GO:0008285">
    <property type="term" value="P:negative regulation of cell population proliferation"/>
    <property type="evidence" value="ECO:0000314"/>
    <property type="project" value="UniProtKB"/>
</dbReference>
<dbReference type="GO" id="GO:0045736">
    <property type="term" value="P:negative regulation of cyclin-dependent protein serine/threonine kinase activity"/>
    <property type="evidence" value="ECO:0000315"/>
    <property type="project" value="UniProtKB"/>
</dbReference>
<dbReference type="GO" id="GO:0043433">
    <property type="term" value="P:negative regulation of DNA-binding transcription factor activity"/>
    <property type="evidence" value="ECO:0000314"/>
    <property type="project" value="UniProtKB"/>
</dbReference>
<dbReference type="GO" id="GO:0045892">
    <property type="term" value="P:negative regulation of DNA-templated transcription"/>
    <property type="evidence" value="ECO:0000314"/>
    <property type="project" value="UniProtKB"/>
</dbReference>
<dbReference type="GO" id="GO:0046329">
    <property type="term" value="P:negative regulation of JNK cascade"/>
    <property type="evidence" value="ECO:0000314"/>
    <property type="project" value="UniProtKB"/>
</dbReference>
<dbReference type="GO" id="GO:0045668">
    <property type="term" value="P:negative regulation of osteoblast differentiation"/>
    <property type="evidence" value="ECO:0000316"/>
    <property type="project" value="MGI"/>
</dbReference>
<dbReference type="GO" id="GO:0001933">
    <property type="term" value="P:negative regulation of protein phosphorylation"/>
    <property type="evidence" value="ECO:0000314"/>
    <property type="project" value="UniProtKB"/>
</dbReference>
<dbReference type="GO" id="GO:0000122">
    <property type="term" value="P:negative regulation of transcription by RNA polymerase II"/>
    <property type="evidence" value="ECO:0000314"/>
    <property type="project" value="UniProtKB"/>
</dbReference>
<dbReference type="GO" id="GO:0002076">
    <property type="term" value="P:osteoblast development"/>
    <property type="evidence" value="ECO:0000316"/>
    <property type="project" value="MGI"/>
</dbReference>
<dbReference type="GO" id="GO:0045944">
    <property type="term" value="P:positive regulation of transcription by RNA polymerase II"/>
    <property type="evidence" value="ECO:0000315"/>
    <property type="project" value="UniProtKB"/>
</dbReference>
<dbReference type="GO" id="GO:0030511">
    <property type="term" value="P:positive regulation of transforming growth factor beta receptor signaling pathway"/>
    <property type="evidence" value="ECO:0000315"/>
    <property type="project" value="UniProtKB"/>
</dbReference>
<dbReference type="GO" id="GO:0006357">
    <property type="term" value="P:regulation of transcription by RNA polymerase II"/>
    <property type="evidence" value="ECO:0000318"/>
    <property type="project" value="GO_Central"/>
</dbReference>
<dbReference type="GO" id="GO:0010332">
    <property type="term" value="P:response to gamma radiation"/>
    <property type="evidence" value="ECO:0000314"/>
    <property type="project" value="UniProtKB"/>
</dbReference>
<dbReference type="GO" id="GO:0009411">
    <property type="term" value="P:response to UV"/>
    <property type="evidence" value="ECO:0000314"/>
    <property type="project" value="UniProtKB"/>
</dbReference>
<dbReference type="GO" id="GO:0045064">
    <property type="term" value="P:T-helper 2 cell differentiation"/>
    <property type="evidence" value="ECO:0000314"/>
    <property type="project" value="UniProtKB"/>
</dbReference>
<dbReference type="GO" id="GO:0045815">
    <property type="term" value="P:transcription initiation-coupled chromatin remodeling"/>
    <property type="evidence" value="ECO:0000315"/>
    <property type="project" value="UniProtKB"/>
</dbReference>
<dbReference type="CDD" id="cd14456">
    <property type="entry name" value="Menin"/>
    <property type="match status" value="1"/>
</dbReference>
<dbReference type="IDEAL" id="IID00404"/>
<dbReference type="InterPro" id="IPR007747">
    <property type="entry name" value="Menin"/>
</dbReference>
<dbReference type="PANTHER" id="PTHR12693">
    <property type="entry name" value="MENIN"/>
    <property type="match status" value="1"/>
</dbReference>
<dbReference type="PANTHER" id="PTHR12693:SF3">
    <property type="entry name" value="MENIN"/>
    <property type="match status" value="1"/>
</dbReference>
<dbReference type="Pfam" id="PF05053">
    <property type="entry name" value="Menin"/>
    <property type="match status" value="2"/>
</dbReference>
<organism>
    <name type="scientific">Homo sapiens</name>
    <name type="common">Human</name>
    <dbReference type="NCBI Taxonomy" id="9606"/>
    <lineage>
        <taxon>Eukaryota</taxon>
        <taxon>Metazoa</taxon>
        <taxon>Chordata</taxon>
        <taxon>Craniata</taxon>
        <taxon>Vertebrata</taxon>
        <taxon>Euteleostomi</taxon>
        <taxon>Mammalia</taxon>
        <taxon>Eutheria</taxon>
        <taxon>Euarchontoglires</taxon>
        <taxon>Primates</taxon>
        <taxon>Haplorrhini</taxon>
        <taxon>Catarrhini</taxon>
        <taxon>Hominidae</taxon>
        <taxon>Homo</taxon>
    </lineage>
</organism>
<name>MEN1_HUMAN</name>
<accession>O00255</accession>
<accession>A5HBC6</accession>
<accession>A5HBC7</accession>
<accession>A5HBC8</accession>
<accession>A5HBC9</accession>
<accession>A5HBD0</accession>
<accession>A5HBD1</accession>
<accession>A5HBD2</accession>
<accession>O00632</accession>
<accession>Q9BUF0</accession>
<accession>Q9BUK2</accession>
<proteinExistence type="evidence at protein level"/>
<protein>
    <recommendedName>
        <fullName>Menin</fullName>
    </recommendedName>
</protein>
<feature type="chain" id="PRO_0000096411" description="Menin">
    <location>
        <begin position="1"/>
        <end position="610"/>
    </location>
</feature>
<feature type="region of interest" description="Interaction with FANCD2" evidence="30">
    <location>
        <begin position="214"/>
        <end position="390"/>
    </location>
</feature>
<feature type="region of interest" description="Disordered" evidence="2">
    <location>
        <begin position="460"/>
        <end position="552"/>
    </location>
</feature>
<feature type="compositionally biased region" description="Basic and acidic residues" evidence="2">
    <location>
        <begin position="484"/>
        <end position="500"/>
    </location>
</feature>
<feature type="modified residue" description="Phosphoserine" evidence="79">
    <location>
        <position position="487"/>
    </location>
</feature>
<feature type="modified residue" description="Phosphoserine" evidence="78">
    <location>
        <position position="543"/>
    </location>
</feature>
<feature type="modified residue" description="Phosphothreonine" evidence="75 78">
    <location>
        <position position="594"/>
    </location>
</feature>
<feature type="splice variant" id="VSP_062035" description="In isoform 2." evidence="65">
    <original>T</original>
    <variation>TGWSPV</variation>
    <location>
        <position position="148"/>
    </location>
</feature>
<feature type="splice variant" id="VSP_004323" description="In isoform 3." evidence="64 65">
    <location>
        <position position="148"/>
    </location>
</feature>
<feature type="splice variant" id="VSP_015854" description="In isoform 3." evidence="64">
    <location>
        <begin position="184"/>
        <end position="218"/>
    </location>
</feature>
<feature type="sequence variant" id="VAR_005425" description="In MEN1; no effect on histone methylation; almost no effect on JUND-binding; dbSNP:rs794728614." evidence="32 63">
    <original>P</original>
    <variation>L</variation>
    <location>
        <position position="12"/>
    </location>
</feature>
<feature type="sequence variant" id="VAR_005426" description="In MEN1; no effect on histone methylation; almost no effect on JUND-binding; no repression of JUND transactivation; dbSNP:rs104894256." evidence="32 45 63">
    <original>L</original>
    <variation>R</variation>
    <location>
        <position position="22"/>
    </location>
</feature>
<feature type="sequence variant" id="VAR_005427" description="In parathyroid adenoma and MEN1; dbSNP:rs28931612." evidence="48 59">
    <original>E</original>
    <variation>K</variation>
    <location>
        <position position="26"/>
    </location>
</feature>
<feature type="sequence variant" id="VAR_005428" description="In MEN1." evidence="13 23 62">
    <original>L</original>
    <variation>W</variation>
    <location>
        <position position="39"/>
    </location>
</feature>
<feature type="sequence variant" id="VAR_005429" description="In MEN1." evidence="23 49">
    <original>G</original>
    <variation>D</variation>
    <location>
        <position position="42"/>
    </location>
</feature>
<feature type="sequence variant" id="VAR_005430" description="In MEN1; dbSNP:rs1592660101." evidence="60">
    <original>E</original>
    <variation>G</variation>
    <location>
        <position position="45"/>
    </location>
</feature>
<feature type="sequence variant" id="VAR_039587" description="In MEN1; dbSNP:rs1114167491." evidence="11 27">
    <original>E</original>
    <variation>K</variation>
    <location>
        <position position="45"/>
    </location>
</feature>
<feature type="sequence variant" id="VAR_065152" description="In MEN1." evidence="40">
    <location>
        <begin position="89"/>
        <end position="95"/>
    </location>
</feature>
<feature type="sequence variant" id="VAR_039588" description="In MEN1." evidence="23">
    <original>R</original>
    <variation>L</variation>
    <location>
        <position position="98"/>
    </location>
</feature>
<feature type="sequence variant" id="VAR_039589" description="In MEN1; dbSNP:rs1389398299." evidence="38">
    <original>G</original>
    <variation>E</variation>
    <location>
        <position position="110"/>
    </location>
</feature>
<feature type="sequence variant" id="VAR_005431" description="In MEN1." evidence="13 22 45 57">
    <location>
        <position position="119"/>
    </location>
</feature>
<feature type="sequence variant" id="VAR_005434" description="In MEN1." evidence="56">
    <original>K</original>
    <variation>I</variation>
    <location>
        <position position="135"/>
    </location>
</feature>
<feature type="sequence variant" id="VAR_005432" description="In MEN1; almost complete loss of histone methylation; strong decrease in JUND-binding; no repression of JUND transactivation; reduced interaction with KMT2A; dbSNP:rs104894263." evidence="17 32 42 54 63">
    <original>H</original>
    <variation>D</variation>
    <location>
        <position position="139"/>
    </location>
</feature>
<feature type="sequence variant" id="VAR_039590" description="In MEN1." evidence="27">
    <original>H</original>
    <variation>P</variation>
    <location>
        <position position="139"/>
    </location>
</feature>
<feature type="sequence variant" id="VAR_039591" description="In MEN1; dbSNP:rs1114167515." evidence="7">
    <original>H</original>
    <variation>R</variation>
    <location>
        <position position="139"/>
    </location>
</feature>
<feature type="sequence variant" id="VAR_005433" description="In MEN1; familial and sporadic cases; almost no effect on JUND-binding; no repression of JUND transactivation." evidence="63">
    <original>H</original>
    <variation>Y</variation>
    <location>
        <position position="139"/>
    </location>
</feature>
<feature type="sequence variant" id="VAR_005436" description="In MEN1; dbSNP:rs1114167543." evidence="37">
    <original>F</original>
    <variation>V</variation>
    <location>
        <position position="144"/>
    </location>
</feature>
<feature type="sequence variant" id="VAR_065153" description="In MEN1." evidence="40">
    <original>I</original>
    <variation>F</variation>
    <location>
        <position position="147"/>
    </location>
</feature>
<feature type="sequence variant" id="VAR_065154" description="In parathyroid tumors; somatic." evidence="54">
    <original>L</original>
    <variation>W</variation>
    <location>
        <position position="152"/>
    </location>
</feature>
<feature type="sequence variant" id="VAR_039592" description="In MEN1; also found in isolated hyperparathyroidism; dbSNP:rs1565648789." evidence="26">
    <original>D</original>
    <variation>V</variation>
    <location>
        <position position="153"/>
    </location>
</feature>
<feature type="sequence variant" id="VAR_039593" description="In MEN1; dbSNP:rs1941873896." evidence="22">
    <original>S</original>
    <variation>I</variation>
    <location>
        <position position="154"/>
    </location>
</feature>
<feature type="sequence variant" id="VAR_039594" description="In MEN1." evidence="5">
    <original>S</original>
    <variation>F</variation>
    <location>
        <position position="155"/>
    </location>
</feature>
<feature type="sequence variant" id="VAR_008017" description="In MEN1 and parathyroid tumor; dbSNP:rs794728648." evidence="3 15 37">
    <original>G</original>
    <variation>D</variation>
    <location>
        <position position="156"/>
    </location>
</feature>
<feature type="sequence variant" id="VAR_005437" description="In MEN1; strong decrease in JUND-binding; dbSNP:rs1565648656." evidence="23 49 63">
    <original>A</original>
    <variation>P</variation>
    <location>
        <position position="160"/>
    </location>
</feature>
<feature type="sequence variant" id="VAR_039595" description="In MEN1." evidence="23">
    <original>A</original>
    <variation>T</variation>
    <location>
        <position position="160"/>
    </location>
</feature>
<feature type="sequence variant" id="VAR_039596" description="In MEN1." evidence="23">
    <original>V</original>
    <variation>F</variation>
    <location>
        <position position="162"/>
    </location>
</feature>
<feature type="sequence variant" id="VAR_005438" description="In MEN1." evidence="23 49">
    <original>A</original>
    <variation>D</variation>
    <location>
        <position position="164"/>
    </location>
</feature>
<feature type="sequence variant" id="VAR_039597" description="In MEN1." evidence="23 25">
    <original>C</original>
    <variation>R</variation>
    <location>
        <position position="165"/>
    </location>
</feature>
<feature type="sequence variant" id="VAR_005439" description="In MEN1." evidence="57">
    <location>
        <begin position="166"/>
        <end position="168"/>
    </location>
</feature>
<feature type="sequence variant" id="VAR_039598" description="In MEN1; dbSNP:rs386134256." evidence="59">
    <original>L</original>
    <variation>P</variation>
    <location>
        <position position="168"/>
    </location>
</feature>
<feature type="sequence variant" id="VAR_005440" description="In dbSNP:rs607969." evidence="27 34 45 47 53 62">
    <original>R</original>
    <variation>Q</variation>
    <location>
        <position position="171"/>
    </location>
</feature>
<feature type="sequence variant" id="VAR_005441" description="In MEN1; dbSNP:rs1114167494." evidence="23 62">
    <original>D</original>
    <variation>Y</variation>
    <location>
        <position position="172"/>
    </location>
</feature>
<feature type="sequence variant" id="VAR_005442" description="In MEN1; loss of JUND-binding; dbSNP:rs376872829." evidence="63">
    <original>A</original>
    <variation>P</variation>
    <location>
        <position position="176"/>
    </location>
</feature>
<feature type="sequence variant" id="VAR_005443" description="In MEN1; dbSNP:rs1555165811." evidence="37 62">
    <original>E</original>
    <variation>D</variation>
    <location>
        <position position="179"/>
    </location>
</feature>
<feature type="sequence variant" id="VAR_039599" description="In MEN1; dbSNP:rs1064793167." evidence="16 37">
    <original>E</original>
    <variation>K</variation>
    <location>
        <position position="179"/>
    </location>
</feature>
<feature type="sequence variant" id="VAR_039600" description="In MEN1." evidence="13">
    <original>E</original>
    <variation>Q</variation>
    <location>
        <position position="179"/>
    </location>
</feature>
<feature type="sequence variant" id="VAR_039601" description="In MEN1; dbSNP:rs1941861451." evidence="37">
    <original>H</original>
    <variation>R</variation>
    <location>
        <position position="181"/>
    </location>
</feature>
<feature type="sequence variant" id="VAR_039602" description="In MEN1 and parathyroid tumor; dbSNP:rs1555165791." evidence="6 15">
    <original>W</original>
    <variation>R</variation>
    <location>
        <position position="183"/>
    </location>
</feature>
<feature type="sequence variant" id="VAR_005444" description="In MEN1." evidence="47 49">
    <original>W</original>
    <variation>S</variation>
    <location>
        <position position="183"/>
    </location>
</feature>
<feature type="sequence variant" id="VAR_005445" description="Found in isolated hyperparathyroidism; likely pathogenic; dbSNP:rs104894262." evidence="61">
    <original>V</original>
    <variation>E</variation>
    <location>
        <position position="184"/>
    </location>
</feature>
<feature type="sequence variant" id="VAR_064937" description="Found in a parathyroid carcinoma sample; somatic mutation." evidence="41">
    <original>V</original>
    <variation>F</variation>
    <location>
        <position position="215"/>
    </location>
</feature>
<feature type="sequence variant" id="VAR_039603" description="In MEN1; dbSNP:rs794728621." evidence="11 37">
    <original>V</original>
    <variation>M</variation>
    <location>
        <position position="215"/>
    </location>
</feature>
<feature type="sequence variant" id="VAR_005446" description="In MEN1; dbSNP:rs886039415." evidence="13 23 25">
    <original>L</original>
    <variation>P</variation>
    <location>
        <position position="223"/>
    </location>
</feature>
<feature type="sequence variant" id="VAR_039604" description="In MEN1; dbSNP:rs1057521110." evidence="6">
    <original>G</original>
    <variation>R</variation>
    <location>
        <position position="225"/>
    </location>
</feature>
<feature type="sequence variant" id="VAR_039605" description="In MEN1." evidence="14">
    <original>R</original>
    <variation>L</variation>
    <location>
        <position position="229"/>
    </location>
</feature>
<feature type="sequence variant" id="VAR_039606" description="In MEN1." evidence="23">
    <original>V</original>
    <variation>F</variation>
    <location>
        <position position="240"/>
    </location>
</feature>
<feature type="sequence variant" id="VAR_039607" description="In MEN1; loss of interaction with KMT2A and JUND." evidence="25 42">
    <original>C</original>
    <variation>F</variation>
    <location>
        <position position="241"/>
    </location>
</feature>
<feature type="sequence variant" id="VAR_008018" description="In MEN1; dbSNP:rs1592649108." evidence="3">
    <original>C</original>
    <variation>R</variation>
    <location>
        <position position="241"/>
    </location>
</feature>
<feature type="sequence variant" id="VAR_039608" description="In MEN1; dbSNP:rs794728624." evidence="6">
    <original>C</original>
    <variation>Y</variation>
    <location>
        <position position="241"/>
    </location>
</feature>
<feature type="sequence variant" id="VAR_005447" description="In MEN1; almost complete loss of histone methylation; loss of JUND-binding; no repression of JUND transactivation; reduced interaction with KMT2A." evidence="32 42 63">
    <original>A</original>
    <variation>V</variation>
    <location>
        <position position="242"/>
    </location>
</feature>
<feature type="sequence variant" id="VAR_039609" description="In MEN1." evidence="6">
    <original>S</original>
    <variation>P</variation>
    <location>
        <position position="253"/>
    </location>
</feature>
<feature type="sequence variant" id="VAR_039610" description="In parathyroid tumor; dbSNP:rs386134259." evidence="15">
    <original>S</original>
    <variation>W</variation>
    <location>
        <position position="253"/>
    </location>
</feature>
<feature type="sequence variant" id="VAR_005448" description="Found in isolated hyperparathyroidism; likely pathogenic; dbSNP:rs104894268." evidence="58">
    <original>E</original>
    <variation>K</variation>
    <location>
        <position position="255"/>
    </location>
</feature>
<feature type="sequence variant" id="VAR_039611" description="In MEN1." evidence="37">
    <original>L</original>
    <variation>R</variation>
    <location>
        <position position="259"/>
    </location>
</feature>
<feature type="sequence variant" id="VAR_039612" description="Found in isolated hyperparathyroidism; likely pathogenic." evidence="8">
    <original>Q</original>
    <variation>P</variation>
    <location>
        <position position="260"/>
    </location>
</feature>
<feature type="sequence variant" id="VAR_039613" description="In MEN1." evidence="24">
    <original>Q</original>
    <variation>QLQ</variation>
    <location>
        <position position="261"/>
    </location>
</feature>
<feature type="sequence variant" id="VAR_005449" description="In MEN1; dbSNP:rs1941794175." evidence="62">
    <original>L</original>
    <variation>P</variation>
    <location>
        <position position="264"/>
    </location>
</feature>
<feature type="sequence variant" id="VAR_005450" description="Found in isolated hyperparathyroidism; likely pathogenic." evidence="62">
    <original>L</original>
    <variation>P</variation>
    <location>
        <position position="267"/>
    </location>
</feature>
<feature type="sequence variant" id="VAR_039614" description="In parathyroid tumor." evidence="15">
    <original>E</original>
    <variation>A</variation>
    <location>
        <position position="274"/>
    </location>
</feature>
<feature type="sequence variant" id="VAR_039615" description="Found in isolated hyperparathyroidism; likely pathogenic; dbSNP:rs1060499973." evidence="21">
    <original>P</original>
    <variation>H</variation>
    <location>
        <position position="277"/>
    </location>
</feature>
<feature type="sequence variant" id="VAR_039616" description="In MEN1; loss of interaction with KMT2A and JUND; dbSNP:rs1114167493." evidence="23 25 42">
    <original>G</original>
    <variation>R</variation>
    <location>
        <position position="281"/>
    </location>
</feature>
<feature type="sequence variant" id="VAR_005451" description="In MEN1; dbSNP:rs1565645563." evidence="49">
    <original>A</original>
    <variation>E</variation>
    <location>
        <position position="284"/>
    </location>
</feature>
<feature type="sequence variant" id="VAR_039617" description="In parathyroid tumor." evidence="15">
    <original>A</original>
    <variation>P</variation>
    <location>
        <position position="284"/>
    </location>
</feature>
<feature type="sequence variant" id="VAR_082607" description="Yields insoluble protein; requires 2 nucleotide substitutions." evidence="42">
    <original>A</original>
    <variation>Q</variation>
    <location>
        <position position="284"/>
    </location>
</feature>
<feature type="sequence variant" id="VAR_005452" description="In MEN1; almost no effect on JUND-binding." evidence="63">
    <original>L</original>
    <variation>P</variation>
    <location>
        <position position="286"/>
    </location>
</feature>
<feature type="sequence variant" id="VAR_039618" description="Found in isolated hyperparathyroidism; likely pathogenic." evidence="12">
    <original>G</original>
    <variation>D</variation>
    <location>
        <position position="305"/>
    </location>
</feature>
<feature type="sequence variant" id="VAR_005453" description="In MEN1; no effect on histone methylation; almost no effect on JUND-binding." evidence="32 63">
    <original>A</original>
    <variation>P</variation>
    <location>
        <position position="309"/>
    </location>
</feature>
<feature type="sequence variant" id="VAR_039619" description="In MEN1." evidence="23 25">
    <original>T</original>
    <variation>P</variation>
    <location>
        <position position="311"/>
    </location>
</feature>
<feature type="sequence variant" id="VAR_005454" description="In MEN1." evidence="23">
    <original>R</original>
    <variation>P</variation>
    <location>
        <position position="314"/>
    </location>
</feature>
<feature type="sequence variant" id="VAR_039620" description="In MEN1; dbSNP:rs1114167495." evidence="13 23">
    <original>H</original>
    <variation>R</variation>
    <location>
        <position position="317"/>
    </location>
</feature>
<feature type="sequence variant" id="VAR_039621" description="In MEN1." evidence="23 25">
    <original>H</original>
    <variation>Y</variation>
    <location>
        <position position="317"/>
    </location>
</feature>
<feature type="sequence variant" id="VAR_039622" description="In MEN1; dbSNP:rs1114167469." evidence="50">
    <original>P</original>
    <variation>L</variation>
    <location>
        <position position="320"/>
    </location>
</feature>
<feature type="sequence variant" id="VAR_039623" description="In MEN1." evidence="37">
    <original>P</original>
    <variation>R</variation>
    <location>
        <position position="320"/>
    </location>
</feature>
<feature type="sequence variant" id="VAR_039624" description="In MEN1." evidence="28">
    <original>A</original>
    <variation>P</variation>
    <location>
        <position position="325"/>
    </location>
</feature>
<feature type="sequence variant" id="VAR_005455" description="In MEN1; dbSNP:rs2071312." evidence="23">
    <original>A</original>
    <variation>D</variation>
    <location>
        <position position="337"/>
    </location>
</feature>
<feature type="sequence variant" id="VAR_039625" description="In MEN1; dbSNP:rs2071312." evidence="13">
    <original>A</original>
    <variation>P</variation>
    <location>
        <position position="337"/>
    </location>
</feature>
<feature type="sequence variant" id="VAR_005456" description="In MEN1." evidence="23">
    <original>W</original>
    <variation>R</variation>
    <location>
        <position position="341"/>
    </location>
</feature>
<feature type="sequence variant" id="VAR_039626" description="In MEN1; dbSNP:rs776561706." evidence="31">
    <original>A</original>
    <variation>P</variation>
    <location>
        <position position="342"/>
    </location>
</feature>
<feature type="sequence variant" id="VAR_005457" description="In MEN1; almost complete loss of histone methylation; almost no effect on JUND-binding; yields insoluble protein." evidence="11 32 42 63">
    <original>T</original>
    <variation>R</variation>
    <location>
        <position position="344"/>
    </location>
</feature>
<feature type="sequence variant" id="VAR_039627" description="In MEN1." evidence="13">
    <original>I</original>
    <variation>N</variation>
    <location>
        <position position="348"/>
    </location>
</feature>
<feature type="sequence variant" id="VAR_039628" description="In MEN1." evidence="14">
    <original>Y</original>
    <variation>D</variation>
    <location>
        <position position="353"/>
    </location>
</feature>
<feature type="sequence variant" id="VAR_039629" description="In MEN1; dbSNP:rs863224807." evidence="37">
    <original>R</original>
    <variation>W</variation>
    <location>
        <position position="355"/>
    </location>
</feature>
<feature type="sequence variant" id="VAR_039630" description="In MEN1." evidence="23">
    <original>D</original>
    <variation>H</variation>
    <location>
        <position position="357"/>
    </location>
</feature>
<feature type="sequence variant" id="VAR_005458" description="In MEN1; dbSNP:rs387906552." evidence="56">
    <original>E</original>
    <variation>K</variation>
    <location>
        <position position="359"/>
    </location>
</feature>
<feature type="sequence variant" id="VAR_005459" description="In MEN1; dbSNP:rs869025185." evidence="22 45">
    <location>
        <position position="363"/>
    </location>
</feature>
<feature type="sequence variant" id="VAR_005460" description="In MEN1; dbSNP:rs1555164707." evidence="23">
    <original>A</original>
    <variation>D</variation>
    <location>
        <position position="368"/>
    </location>
</feature>
<feature type="sequence variant" id="VAR_039631" description="In MEN1." evidence="23">
    <original>I</original>
    <variation>M</variation>
    <location>
        <position position="372"/>
    </location>
</feature>
<feature type="sequence variant" id="VAR_039632" description="In MEN1; dbSNP:rs794728627." evidence="14">
    <original>P</original>
    <variation>S</variation>
    <location>
        <position position="373"/>
    </location>
</feature>
<feature type="sequence variant" id="VAR_039633" description="In MEN1; dbSNP:rs1298484645." evidence="13">
    <original>A</original>
    <variation>V</variation>
    <location>
        <position position="385"/>
    </location>
</feature>
<feature type="sequence variant" id="VAR_039634" description="In MEN1; also found in isolated hyperparathyroidism." evidence="26">
    <original>A</original>
    <variation>P</variation>
    <location>
        <position position="411"/>
    </location>
</feature>
<feature type="sequence variant" id="VAR_065155" description="In MEN1." evidence="40">
    <original>L</original>
    <variation>R</variation>
    <location>
        <position position="413"/>
    </location>
</feature>
<feature type="sequence variant" id="VAR_039635" description="In MEN1." evidence="18 40">
    <original>L</original>
    <variation>P</variation>
    <location>
        <position position="414"/>
    </location>
</feature>
<feature type="sequence variant" id="VAR_039636" description="In MEN1; dbSNP:rs1446518998." evidence="14">
    <original>R</original>
    <variation>P</variation>
    <location>
        <position position="415"/>
    </location>
</feature>
<feature type="sequence variant" id="VAR_005463" description="In MEN1.">
    <location>
        <begin position="418"/>
        <end position="421"/>
    </location>
</feature>
<feature type="sequence variant" id="VAR_039637" description="In MEN1; dbSNP:rs104894264." evidence="38">
    <original>D</original>
    <variation>H</variation>
    <location>
        <position position="418"/>
    </location>
</feature>
<feature type="sequence variant" id="VAR_005461" description="In MEN1; dbSNP:rs104894264." evidence="22 23 25 53">
    <original>D</original>
    <variation>N</variation>
    <location>
        <position position="418"/>
    </location>
</feature>
<feature type="sequence variant" id="VAR_005462" description="In MEN1.">
    <location>
        <position position="418"/>
    </location>
</feature>
<feature type="sequence variant" id="VAR_039638" description="In MEN1; dbSNP:rs386134249." evidence="37">
    <original>C</original>
    <variation>Y</variation>
    <location>
        <position position="421"/>
    </location>
</feature>
<feature type="sequence variant" id="VAR_039639" description="In MEN1." evidence="55">
    <original>W</original>
    <variation>S</variation>
    <location>
        <position position="423"/>
    </location>
</feature>
<feature type="sequence variant" id="VAR_039640" description="In MEN1; dbSNP:rs1114167528." evidence="10">
    <original>S</original>
    <variation>R</variation>
    <location>
        <position position="427"/>
    </location>
</feature>
<feature type="sequence variant" id="VAR_039641" description="In MEN1; dbSNP:rs398124435." evidence="37">
    <original>W</original>
    <variation>C</variation>
    <location>
        <position position="436"/>
    </location>
</feature>
<feature type="sequence variant" id="VAR_005464" description="In MEN1; no effect on histone methylation; almost no effect on JUND-binding; modest repression of JUND transactivation; dbSNP:rs104894259." evidence="32 37 45 63">
    <original>W</original>
    <variation>R</variation>
    <location>
        <position position="436"/>
    </location>
</feature>
<feature type="sequence variant" id="VAR_039642" description="In MEN1." evidence="4">
    <original>L</original>
    <variation>P</variation>
    <location>
        <position position="444"/>
    </location>
</feature>
<feature type="sequence variant" id="VAR_005465" description="In MEN1; sporadic; with Zollinger-Ellison syndrome; dbSNP:rs1941604532." evidence="46">
    <original>F</original>
    <variation>S</variation>
    <location>
        <position position="447"/>
    </location>
</feature>
<feature type="sequence variant" id="VAR_065156" description="In MEN1." evidence="40">
    <original>W</original>
    <variation>C</variation>
    <location>
        <position position="471"/>
    </location>
</feature>
<feature type="sequence variant" id="VAR_039643" description="In MEN1." evidence="23">
    <original>R</original>
    <variation>C</variation>
    <location>
        <position position="527"/>
    </location>
</feature>
<feature type="sequence variant" id="VAR_039644" description="In MEN1; dbSNP:rs745404679." evidence="25">
    <original>P</original>
    <variation>S</variation>
    <location>
        <position position="540"/>
    </location>
</feature>
<feature type="sequence variant" id="VAR_005466" description="In dbSNP:rs2959656." evidence="6 27 36 40 45 50 53 62 76 77 78">
    <original>T</original>
    <variation>A</variation>
    <location>
        <position position="541"/>
    </location>
</feature>
<feature type="sequence variant" id="VAR_039645" description="In MEN1; dbSNP:rs1387157979." evidence="13">
    <original>P</original>
    <variation>S</variation>
    <location>
        <position position="544"/>
    </location>
</feature>
<feature type="sequence variant" id="VAR_039646" description="In adrenal adenoma; somatic; dbSNP:rs121913035." evidence="9">
    <original>T</original>
    <variation>S</variation>
    <location>
        <position position="552"/>
    </location>
</feature>
<feature type="sequence variant" id="VAR_005467" description="In MEN1; dbSNP:rs863224527." evidence="23">
    <original>S</original>
    <variation>N</variation>
    <location>
        <position position="555"/>
    </location>
</feature>
<feature type="sequence variant" id="VAR_039647" description="In MEN1." evidence="23">
    <original>S</original>
    <variation>R</variation>
    <location>
        <position position="555"/>
    </location>
</feature>
<feature type="mutagenesis site" description="Reduced interaction with KMT2A." evidence="42">
    <original>A</original>
    <variation>F</variation>
    <location>
        <position position="182"/>
    </location>
</feature>
<feature type="mutagenesis site" description="Loss of interaction with KMT2A and JUND." evidence="42">
    <original>M</original>
    <variation>W</variation>
    <location>
        <position position="278"/>
    </location>
</feature>
<feature type="mutagenesis site" description="Reduced interaction with KMT2A; when associated with R-288 and R-290." evidence="42">
    <original>D</original>
    <variation>R</variation>
    <location>
        <position position="285"/>
    </location>
</feature>
<feature type="mutagenesis site" description="Reduced interaction with KMT2A; when associated with R-285 and R-290." evidence="42">
    <original>E</original>
    <variation>R</variation>
    <location>
        <position position="288"/>
    </location>
</feature>
<feature type="mutagenesis site" description="Reduced interaction with KMT2A; when associated with R-285 and R-288." evidence="42">
    <original>E</original>
    <variation>R</variation>
    <location>
        <position position="290"/>
    </location>
</feature>
<feature type="mutagenesis site" description="Reduced interaction with KMT2A." evidence="42">
    <original>Y</original>
    <variation>A</variation>
    <location>
        <position position="319"/>
    </location>
</feature>
<feature type="mutagenesis site" description="Reduced interaction with KMT2A." evidence="42">
    <original>Y</original>
    <variation>A</variation>
    <location>
        <position position="323"/>
    </location>
</feature>
<feature type="mutagenesis site" description="Reduced interaction with KMT2A; when associated with A-370." evidence="42">
    <original>E</original>
    <variation>A</variation>
    <location>
        <position position="366"/>
    </location>
</feature>
<feature type="mutagenesis site" description="Reduced interaction with KMT2A; when associated with A-366." evidence="42">
    <original>D</original>
    <variation>A</variation>
    <location>
        <position position="370"/>
    </location>
</feature>
<feature type="helix" evidence="88">
    <location>
        <begin position="5"/>
        <end position="8"/>
    </location>
</feature>
<feature type="helix" evidence="88">
    <location>
        <begin position="16"/>
        <end position="27"/>
    </location>
</feature>
<feature type="strand" evidence="88">
    <location>
        <begin position="29"/>
        <end position="31"/>
    </location>
</feature>
<feature type="helix" evidence="88">
    <location>
        <begin position="34"/>
        <end position="49"/>
    </location>
</feature>
<feature type="strand" evidence="89">
    <location>
        <begin position="63"/>
        <end position="67"/>
    </location>
</feature>
<feature type="turn" evidence="80">
    <location>
        <begin position="70"/>
        <end position="72"/>
    </location>
</feature>
<feature type="strand" evidence="86">
    <location>
        <begin position="75"/>
        <end position="78"/>
    </location>
</feature>
<feature type="helix" evidence="88">
    <location>
        <begin position="83"/>
        <end position="100"/>
    </location>
</feature>
<feature type="helix" evidence="88">
    <location>
        <begin position="103"/>
        <end position="105"/>
    </location>
</feature>
<feature type="helix" evidence="88">
    <location>
        <begin position="109"/>
        <end position="111"/>
    </location>
</feature>
<feature type="helix" evidence="88">
    <location>
        <begin position="115"/>
        <end position="127"/>
    </location>
</feature>
<feature type="strand" evidence="90">
    <location>
        <begin position="131"/>
        <end position="133"/>
    </location>
</feature>
<feature type="strand" evidence="82">
    <location>
        <begin position="137"/>
        <end position="139"/>
    </location>
</feature>
<feature type="helix" evidence="88">
    <location>
        <begin position="143"/>
        <end position="149"/>
    </location>
</feature>
<feature type="helix" evidence="88">
    <location>
        <begin position="154"/>
        <end position="167"/>
    </location>
</feature>
<feature type="strand" evidence="88">
    <location>
        <begin position="174"/>
        <end position="177"/>
    </location>
</feature>
<feature type="strand" evidence="88">
    <location>
        <begin position="182"/>
        <end position="187"/>
    </location>
</feature>
<feature type="helix" evidence="88">
    <location>
        <begin position="188"/>
        <end position="190"/>
    </location>
</feature>
<feature type="strand" evidence="88">
    <location>
        <begin position="192"/>
        <end position="194"/>
    </location>
</feature>
<feature type="strand" evidence="88">
    <location>
        <begin position="200"/>
        <end position="202"/>
    </location>
</feature>
<feature type="helix" evidence="80">
    <location>
        <begin position="204"/>
        <end position="206"/>
    </location>
</feature>
<feature type="helix" evidence="88">
    <location>
        <begin position="212"/>
        <end position="216"/>
    </location>
</feature>
<feature type="helix" evidence="88">
    <location>
        <begin position="220"/>
        <end position="225"/>
    </location>
</feature>
<feature type="helix" evidence="88">
    <location>
        <begin position="232"/>
        <end position="241"/>
    </location>
</feature>
<feature type="strand" evidence="88">
    <location>
        <begin position="246"/>
        <end position="248"/>
    </location>
</feature>
<feature type="helix" evidence="88">
    <location>
        <begin position="254"/>
        <end position="270"/>
    </location>
</feature>
<feature type="turn" evidence="88">
    <location>
        <begin position="271"/>
        <end position="275"/>
    </location>
</feature>
<feature type="helix" evidence="88">
    <location>
        <begin position="277"/>
        <end position="289"/>
    </location>
</feature>
<feature type="strand" evidence="85">
    <location>
        <begin position="293"/>
        <end position="295"/>
    </location>
</feature>
<feature type="helix" evidence="88">
    <location>
        <begin position="298"/>
        <end position="312"/>
    </location>
</feature>
<feature type="helix" evidence="88">
    <location>
        <begin position="319"/>
        <end position="330"/>
    </location>
</feature>
<feature type="helix" evidence="88">
    <location>
        <begin position="334"/>
        <end position="348"/>
    </location>
</feature>
<feature type="helix" evidence="84">
    <location>
        <begin position="355"/>
        <end position="357"/>
    </location>
</feature>
<feature type="helix" evidence="88">
    <location>
        <begin position="358"/>
        <end position="369"/>
    </location>
</feature>
<feature type="helix" evidence="88">
    <location>
        <begin position="371"/>
        <end position="384"/>
    </location>
</feature>
<feature type="helix" evidence="88">
    <location>
        <begin position="403"/>
        <end position="405"/>
    </location>
</feature>
<feature type="helix" evidence="88">
    <location>
        <begin position="407"/>
        <end position="424"/>
    </location>
</feature>
<feature type="strand" evidence="91">
    <location>
        <begin position="427"/>
        <end position="429"/>
    </location>
</feature>
<feature type="helix" evidence="88">
    <location>
        <begin position="434"/>
        <end position="445"/>
    </location>
</feature>
<feature type="helix" evidence="88">
    <location>
        <begin position="449"/>
        <end position="452"/>
    </location>
</feature>
<feature type="strand" evidence="81">
    <location>
        <begin position="456"/>
        <end position="458"/>
    </location>
</feature>
<feature type="strand" evidence="87">
    <location>
        <begin position="521"/>
        <end position="524"/>
    </location>
</feature>
<feature type="strand" evidence="81">
    <location>
        <begin position="550"/>
        <end position="552"/>
    </location>
</feature>
<feature type="helix" evidence="88">
    <location>
        <begin position="556"/>
        <end position="561"/>
    </location>
</feature>
<feature type="helix" evidence="88">
    <location>
        <begin position="562"/>
        <end position="564"/>
    </location>
</feature>
<feature type="strand" evidence="83">
    <location>
        <begin position="567"/>
        <end position="569"/>
    </location>
</feature>
<feature type="helix" evidence="88">
    <location>
        <begin position="572"/>
        <end position="580"/>
    </location>
</feature>
<feature type="helix" evidence="80">
    <location>
        <begin position="598"/>
        <end position="607"/>
    </location>
</feature>
<comment type="function">
    <text evidence="1 19 20 29 30 32 42">Essential component of a MLL/SET1 histone methyltransferase (HMT) complex, a complex that specifically methylates 'Lys-4' of histone H3 (H3K4). Functions as a transcriptional regulator. Binds to the TERT promoter and represses telomerase expression. Plays a role in TGFB1-mediated inhibition of cell-proliferation, possibly regulating SMAD3 transcriptional activity. Represses JUND-mediated transcriptional activation on AP1 sites, as well as that mediated by NFKB subunit RELA. Positively regulates HOXC8 and HOXC6 gene expression. May be involved in normal hematopoiesis through the activation of HOXA9 expression (By similarity). May be involved in DNA repair.</text>
</comment>
<comment type="subunit">
    <text evidence="19 20 30 32 33 35 39 42 43 44 63">Component of the MLL-HCF complex, at least composed of KMT2A/MLL1, MEN1, ASH2L, RBBP5, DPY30, WDR5, HCFC1 and HCFC2. Component of the menin-associated histone methyltransferase complex, at least composed of KMT2B/MLL4, MEN1, ASH2L, RBBP5, DPY30 and WDR5. Interacts with POLR2B. Interacts with POLR2A phosphorylated at 'Ser-5', but not with the unphosphorylated, nor 'Ser-2' phosphorylated POLR2A forms. Interacts with FANCD2 and DBF4. Interacts with JUND (via MBM motif); inhibits the interaction of JUND with MAPK10 and the phosphorylation of JUND by MAP kinases MAPK8 and MAPK10 (PubMed:22327296, PubMed:9989505). Interacts with SMAD3, but not with SMAD2, nor SMAD4. Directly interacts with NFKB1, NFKB2 and RELA. Interacts with KMT2A (via MBM motif) (PubMed:22327296, PubMed:22936661, PubMed:25305204). The KMT2A-MEN1 complex interacts with PSIP1 with a greater affinity as MEN1 enhances interaction of KMT2A with PSIP1 (PubMed:22327296, PubMed:25305204). Interacts with the fusion protein KMT2A-MLLT3 (PubMed:22936661, PubMed:25305204).</text>
</comment>
<comment type="interaction">
    <interactant intactId="EBI-592789">
        <id>O00255</id>
    </interactant>
    <interactant intactId="EBI-359343">
        <id>Q9BXW9</id>
        <label>FANCD2</label>
    </interactant>
    <organismsDiffer>false</organismsDiffer>
    <experiments>4</experiments>
</comment>
<comment type="interaction">
    <interactant intactId="EBI-592789">
        <id>O00255</id>
    </interactant>
    <interactant intactId="EBI-350338">
        <id>P35579</id>
        <label>MYH9</label>
    </interactant>
    <organismsDiffer>false</organismsDiffer>
    <experiments>3</experiments>
</comment>
<comment type="interaction">
    <interactant intactId="EBI-592789">
        <id>O00255</id>
    </interactant>
    <interactant intactId="EBI-697771">
        <id>PRO_0000030311</id>
        <label>NFKB1</label>
        <dbReference type="UniProtKB" id="P19838"/>
    </interactant>
    <organismsDiffer>false</organismsDiffer>
    <experiments>2</experiments>
</comment>
<comment type="interaction">
    <interactant intactId="EBI-592789">
        <id>O00255</id>
    </interactant>
    <interactant intactId="EBI-540834">
        <id>P61964</id>
        <label>WDR5</label>
    </interactant>
    <organismsDiffer>false</organismsDiffer>
    <experiments>4</experiments>
</comment>
<comment type="interaction">
    <interactant intactId="EBI-9869387">
        <id>O00255-2</id>
    </interactant>
    <interactant intactId="EBI-2682803">
        <id>P17535</id>
        <label>JUND</label>
    </interactant>
    <organismsDiffer>false</organismsDiffer>
    <experiments>6</experiments>
</comment>
<comment type="interaction">
    <interactant intactId="EBI-9869387">
        <id>O00255-2</id>
    </interactant>
    <interactant intactId="EBI-591370">
        <id>Q03164</id>
        <label>KMT2A</label>
    </interactant>
    <organismsDiffer>false</organismsDiffer>
    <experiments>12</experiments>
</comment>
<comment type="interaction">
    <interactant intactId="EBI-9869387">
        <id>O00255-2</id>
    </interactant>
    <interactant intactId="EBI-350338">
        <id>P35579</id>
        <label>MYH9</label>
    </interactant>
    <organismsDiffer>false</organismsDiffer>
    <experiments>4</experiments>
</comment>
<comment type="interaction">
    <interactant intactId="EBI-9869387">
        <id>O00255-2</id>
    </interactant>
    <interactant intactId="EBI-697771">
        <id>PRO_0000030311</id>
        <label>NFKB1</label>
        <dbReference type="UniProtKB" id="P19838"/>
    </interactant>
    <organismsDiffer>false</organismsDiffer>
    <experiments>4</experiments>
</comment>
<comment type="interaction">
    <interactant intactId="EBI-9869387">
        <id>O00255-2</id>
    </interactant>
    <interactant intactId="EBI-9869360">
        <id>PRO_0000030322</id>
        <label>NFKB2</label>
        <dbReference type="UniProtKB" id="Q00653"/>
    </interactant>
    <organismsDiffer>false</organismsDiffer>
    <experiments>3</experiments>
</comment>
<comment type="interaction">
    <interactant intactId="EBI-9869387">
        <id>O00255-2</id>
    </interactant>
    <interactant intactId="EBI-73886">
        <id>Q04206</id>
        <label>RELA</label>
    </interactant>
    <organismsDiffer>false</organismsDiffer>
    <experiments>4</experiments>
</comment>
<comment type="interaction">
    <interactant intactId="EBI-9869387">
        <id>O00255-2</id>
    </interactant>
    <interactant intactId="EBI-1165329">
        <id>Q05982</id>
        <label>Nme1</label>
    </interactant>
    <organismsDiffer>true</organismsDiffer>
    <experiments>5</experiments>
</comment>
<comment type="subcellular location">
    <subcellularLocation>
        <location evidence="30">Nucleus</location>
    </subcellularLocation>
    <text>Concentrated in nuclear body-like structures. Relocates to the nuclear matrix upon gamma irradiation.</text>
</comment>
<comment type="alternative products">
    <event type="alternative splicing"/>
    <isoform>
        <id>O00255-2</id>
        <name>1</name>
        <name>Short</name>
        <sequence type="displayed"/>
    </isoform>
    <isoform>
        <id>O00255-1</id>
        <name>2</name>
        <name>Long</name>
        <sequence type="described" ref="VSP_062035"/>
    </isoform>
    <isoform>
        <id>O00255-3</id>
        <name>3</name>
        <sequence type="described" ref="VSP_004323 VSP_015854"/>
    </isoform>
</comment>
<comment type="tissue specificity">
    <text>Ubiquitous.</text>
</comment>
<comment type="disease" evidence="3 4 5 6 7 10 11 13 14 16 17 18 22 23 24 25 26 27 28 31 32 37 38 40 42 45 46 47 49 50 51 52 53 54 55 56 57 59 60 62 63">
    <disease id="DI-01593">
        <name>Familial multiple endocrine neoplasia type I</name>
        <acronym>MEN1</acronym>
        <description>Autosomal dominant disorder characterized by tumors of the parathyroid glands, gastro-intestinal endocrine tissue, the anterior pituitary and other tissues. Cutaneous lesions and nervous-tissue tumors can exist. Prognosis in MEN1 patients is related to hormonal hypersecretion by tumors, such as hypergastrinemia causing severe peptic ulcer disease (Zollinger-Ellison syndrome, ZES), primary hyperparathyroidism, and acute forms of hyperinsulinemia.</description>
        <dbReference type="MIM" id="131100"/>
    </disease>
    <text>The disease is caused by variants affecting the gene represented in this entry.</text>
</comment>
<comment type="disease">
    <text evidence="8 12 21 26 58 61 62">MEN1 inactivating mutations are responsible for hyperfunctioning of the parathyroid glands and subsequent primary hyperparathyroidism. Primary hyperparathyroidism can occur in isolation or in association with multiple endocrine neoplasia.</text>
</comment>
<comment type="sequence caution" evidence="66">
    <conflict type="frameshift">
        <sequence resource="EMBL-CDS" id="ABQ12624"/>
    </conflict>
    <text>The frameshift is caused by a single nucleotide deletion which is found in a MEN1 kindred.</text>
</comment>
<comment type="sequence caution" evidence="66">
    <conflict type="frameshift">
        <sequence resource="EMBL-CDS" id="ABQ12627"/>
    </conflict>
    <text>The frameshift is caused by a single nucleotide deletion which is found in a MEN1 kindred.</text>
</comment>
<comment type="online information" name="Atlas of Genetics and Cytogenetics in Oncology and Haematology">
    <link uri="https://atlasgeneticsoncology.org/gene/148/MEN1"/>
</comment>
<gene>
    <name type="primary">MEN1</name>
    <name type="synonym">SCG2</name>
</gene>
<evidence type="ECO:0000250" key="1">
    <source>
        <dbReference type="UniProtKB" id="O88559"/>
    </source>
</evidence>
<evidence type="ECO:0000256" key="2">
    <source>
        <dbReference type="SAM" id="MobiDB-lite"/>
    </source>
</evidence>
<evidence type="ECO:0000269" key="3">
    <source>
    </source>
</evidence>
<evidence type="ECO:0000269" key="4">
    <source>
    </source>
</evidence>
<evidence type="ECO:0000269" key="5">
    <source>
    </source>
</evidence>
<evidence type="ECO:0000269" key="6">
    <source>
    </source>
</evidence>
<evidence type="ECO:0000269" key="7">
    <source>
    </source>
</evidence>
<evidence type="ECO:0000269" key="8">
    <source>
    </source>
</evidence>
<evidence type="ECO:0000269" key="9">
    <source>
    </source>
</evidence>
<evidence type="ECO:0000269" key="10">
    <source>
    </source>
</evidence>
<evidence type="ECO:0000269" key="11">
    <source>
    </source>
</evidence>
<evidence type="ECO:0000269" key="12">
    <source>
    </source>
</evidence>
<evidence type="ECO:0000269" key="13">
    <source>
    </source>
</evidence>
<evidence type="ECO:0000269" key="14">
    <source>
    </source>
</evidence>
<evidence type="ECO:0000269" key="15">
    <source>
    </source>
</evidence>
<evidence type="ECO:0000269" key="16">
    <source>
    </source>
</evidence>
<evidence type="ECO:0000269" key="17">
    <source>
    </source>
</evidence>
<evidence type="ECO:0000269" key="18">
    <source>
    </source>
</evidence>
<evidence type="ECO:0000269" key="19">
    <source>
    </source>
</evidence>
<evidence type="ECO:0000269" key="20">
    <source>
    </source>
</evidence>
<evidence type="ECO:0000269" key="21">
    <source>
    </source>
</evidence>
<evidence type="ECO:0000269" key="22">
    <source>
    </source>
</evidence>
<evidence type="ECO:0000269" key="23">
    <source>
    </source>
</evidence>
<evidence type="ECO:0000269" key="24">
    <source>
    </source>
</evidence>
<evidence type="ECO:0000269" key="25">
    <source>
    </source>
</evidence>
<evidence type="ECO:0000269" key="26">
    <source>
    </source>
</evidence>
<evidence type="ECO:0000269" key="27">
    <source>
    </source>
</evidence>
<evidence type="ECO:0000269" key="28">
    <source>
    </source>
</evidence>
<evidence type="ECO:0000269" key="29">
    <source>
    </source>
</evidence>
<evidence type="ECO:0000269" key="30">
    <source>
    </source>
</evidence>
<evidence type="ECO:0000269" key="31">
    <source>
    </source>
</evidence>
<evidence type="ECO:0000269" key="32">
    <source>
    </source>
</evidence>
<evidence type="ECO:0000269" key="33">
    <source>
    </source>
</evidence>
<evidence type="ECO:0000269" key="34">
    <source>
    </source>
</evidence>
<evidence type="ECO:0000269" key="35">
    <source>
    </source>
</evidence>
<evidence type="ECO:0000269" key="36">
    <source>
    </source>
</evidence>
<evidence type="ECO:0000269" key="37">
    <source>
    </source>
</evidence>
<evidence type="ECO:0000269" key="38">
    <source>
    </source>
</evidence>
<evidence type="ECO:0000269" key="39">
    <source>
    </source>
</evidence>
<evidence type="ECO:0000269" key="40">
    <source>
    </source>
</evidence>
<evidence type="ECO:0000269" key="41">
    <source>
    </source>
</evidence>
<evidence type="ECO:0000269" key="42">
    <source>
    </source>
</evidence>
<evidence type="ECO:0000269" key="43">
    <source>
    </source>
</evidence>
<evidence type="ECO:0000269" key="44">
    <source>
    </source>
</evidence>
<evidence type="ECO:0000269" key="45">
    <source>
    </source>
</evidence>
<evidence type="ECO:0000269" key="46">
    <source>
    </source>
</evidence>
<evidence type="ECO:0000269" key="47">
    <source>
    </source>
</evidence>
<evidence type="ECO:0000269" key="48">
    <source>
    </source>
</evidence>
<evidence type="ECO:0000269" key="49">
    <source>
    </source>
</evidence>
<evidence type="ECO:0000269" key="50">
    <source>
    </source>
</evidence>
<evidence type="ECO:0000269" key="51">
    <source>
    </source>
</evidence>
<evidence type="ECO:0000269" key="52">
    <source>
    </source>
</evidence>
<evidence type="ECO:0000269" key="53">
    <source>
    </source>
</evidence>
<evidence type="ECO:0000269" key="54">
    <source>
    </source>
</evidence>
<evidence type="ECO:0000269" key="55">
    <source>
    </source>
</evidence>
<evidence type="ECO:0000269" key="56">
    <source>
    </source>
</evidence>
<evidence type="ECO:0000269" key="57">
    <source>
    </source>
</evidence>
<evidence type="ECO:0000269" key="58">
    <source>
    </source>
</evidence>
<evidence type="ECO:0000269" key="59">
    <source>
    </source>
</evidence>
<evidence type="ECO:0000269" key="60">
    <source>
    </source>
</evidence>
<evidence type="ECO:0000269" key="61">
    <source>
    </source>
</evidence>
<evidence type="ECO:0000269" key="62">
    <source>
    </source>
</evidence>
<evidence type="ECO:0000269" key="63">
    <source>
    </source>
</evidence>
<evidence type="ECO:0000303" key="64">
    <source>
    </source>
</evidence>
<evidence type="ECO:0000303" key="65">
    <source>
    </source>
</evidence>
<evidence type="ECO:0000305" key="66"/>
<evidence type="ECO:0007744" key="67">
    <source>
        <dbReference type="PDB" id="3U84"/>
    </source>
</evidence>
<evidence type="ECO:0007744" key="68">
    <source>
        <dbReference type="PDB" id="3U85"/>
    </source>
</evidence>
<evidence type="ECO:0007744" key="69">
    <source>
        <dbReference type="PDB" id="3U86"/>
    </source>
</evidence>
<evidence type="ECO:0007744" key="70">
    <source>
        <dbReference type="PDB" id="3U88"/>
    </source>
</evidence>
<evidence type="ECO:0007744" key="71">
    <source>
        <dbReference type="PDB" id="4GPQ"/>
    </source>
</evidence>
<evidence type="ECO:0007744" key="72">
    <source>
        <dbReference type="PDB" id="4GQ3"/>
    </source>
</evidence>
<evidence type="ECO:0007744" key="73">
    <source>
        <dbReference type="PDB" id="4GQ4"/>
    </source>
</evidence>
<evidence type="ECO:0007744" key="74">
    <source>
        <dbReference type="PDB" id="4GQ6"/>
    </source>
</evidence>
<evidence type="ECO:0007744" key="75">
    <source>
    </source>
</evidence>
<evidence type="ECO:0007744" key="76">
    <source>
    </source>
</evidence>
<evidence type="ECO:0007744" key="77">
    <source>
    </source>
</evidence>
<evidence type="ECO:0007744" key="78">
    <source>
    </source>
</evidence>
<evidence type="ECO:0007744" key="79">
    <source>
    </source>
</evidence>
<evidence type="ECO:0007829" key="80">
    <source>
        <dbReference type="PDB" id="3U84"/>
    </source>
</evidence>
<evidence type="ECO:0007829" key="81">
    <source>
        <dbReference type="PDB" id="4GQ4"/>
    </source>
</evidence>
<evidence type="ECO:0007829" key="82">
    <source>
        <dbReference type="PDB" id="4GQ6"/>
    </source>
</evidence>
<evidence type="ECO:0007829" key="83">
    <source>
        <dbReference type="PDB" id="4OG6"/>
    </source>
</evidence>
<evidence type="ECO:0007829" key="84">
    <source>
        <dbReference type="PDB" id="5DDB"/>
    </source>
</evidence>
<evidence type="ECO:0007829" key="85">
    <source>
        <dbReference type="PDB" id="6B41"/>
    </source>
</evidence>
<evidence type="ECO:0007829" key="86">
    <source>
        <dbReference type="PDB" id="6BXY"/>
    </source>
</evidence>
<evidence type="ECO:0007829" key="87">
    <source>
        <dbReference type="PDB" id="6E1A"/>
    </source>
</evidence>
<evidence type="ECO:0007829" key="88">
    <source>
        <dbReference type="PDB" id="6O5I"/>
    </source>
</evidence>
<evidence type="ECO:0007829" key="89">
    <source>
        <dbReference type="PDB" id="6WNH"/>
    </source>
</evidence>
<evidence type="ECO:0007829" key="90">
    <source>
        <dbReference type="PDB" id="7UJ4"/>
    </source>
</evidence>
<evidence type="ECO:0007829" key="91">
    <source>
        <dbReference type="PDB" id="8GPN"/>
    </source>
</evidence>
<sequence>MGLKAAQKTLFPLRSIDDVVRLFAAELGREEPDLVLLSLVLGFVEHFLAVNRVIPTNVPELTFQPSPAPDPPGGLTYFPVADLSIIAALYARFTAQIRGAVDLSLYPREGGVSSRELVKKVSDVIWNSLSRSYFKDRAHIQSLFSFITGTKLDSSGVAFAVVGACQALGLRDVHLALSEDHAWVVFGPNGEQTAEVTWHGKGNEDRRGQTVNAGVAERSWLYLKGSYMRCDRKMEVAFMVCAINPSIDLHTDSLELLQLQQKLLWLLYDLGHLERYPMALGNLADLEELEPTPGRPDPLTLYHKGIASAKTYYRDEHIYPYMYLAGYHCRNRNVREALQAWADTATVIQDYNYCREDEEIYKEFFEVANDVIPNLLKEAASLLEAGEERPGEQSQGTQSQGSALQDPECFAHLLRFYDGICKWEEGSPTPVLHVGWATFLVQSLGRFEGQVRQKVRIVSREAEAAEAEEPWGEEAREGRRRGPRRESKPEEPPPPKKPALDKGLGTGQGAVSGPPRKPPGTVAGTARGPEGGSTAQVPAPTASPPPEGPVLTFQSEKMKGMKELLVATKINSSAIKLQLTAQSQVQMKKQKVSTPSDYTLSFLKRQRKGL</sequence>